<protein>
    <recommendedName>
        <fullName evidence="45">Small ribosomal subunit protein RACK1</fullName>
    </recommendedName>
    <alternativeName>
        <fullName>Cell proliferation-inducing gene 21 protein</fullName>
    </alternativeName>
    <alternativeName>
        <fullName>Guanine nucleotide-binding protein subunit beta-2-like 1</fullName>
    </alternativeName>
    <alternativeName>
        <fullName>Guanine nucleotide-binding protein subunit beta-like protein 12.3</fullName>
    </alternativeName>
    <alternativeName>
        <fullName>Human lung cancer oncogene 7 protein</fullName>
        <shortName>HLC-7</shortName>
    </alternativeName>
    <alternativeName>
        <fullName>Receptor for activated C kinase</fullName>
    </alternativeName>
    <alternativeName>
        <fullName>Receptor of activated protein C kinase 1</fullName>
    </alternativeName>
    <component>
        <recommendedName>
            <fullName>Small ribosomal subunit protein RACK1, N-terminally processed</fullName>
        </recommendedName>
        <alternativeName>
            <fullName>Guanine nucleotide-binding protein subunit beta-2-like 1, N-terminally processed</fullName>
        </alternativeName>
        <alternativeName>
            <fullName>Receptor of activated protein C kinase 1, N-terminally processed</fullName>
        </alternativeName>
    </component>
</protein>
<accession>P63244</accession>
<accession>B3KTJ0</accession>
<accession>D3DWS0</accession>
<accession>P25388</accession>
<accession>P99049</accession>
<accession>Q53HU2</accession>
<accession>Q5J8M6</accession>
<accession>Q5VLR4</accession>
<accession>Q6FH47</accession>
<comment type="function">
    <text evidence="2 6 9 10 15 16 17 19 20 21 23 24 25 27 29 30 31 33 34 36 39 43">Scaffolding protein involved in the recruitment, assembly and/or regulation of a variety of signaling molecules. Interacts with a wide variety of proteins and plays a role in many cellular processes. Component of the 40S ribosomal subunit involved in translational repression (PubMed:23636399). Involved in the initiation of the ribosome quality control (RQC), a pathway that takes place when a ribosome has stalled during translation, by promoting ubiquitination of a subset of 40S ribosomal subunits (PubMed:28132843). Binds to and stabilizes activated protein kinase C (PKC), increasing PKC-mediated phosphorylation. May recruit activated PKC to the ribosome, leading to phosphorylation of EIF6. Inhibits the activity of SRC kinases including SRC, LCK and YES1. Inhibits cell growth by prolonging the G0/G1 phase of the cell cycle. Enhances phosphorylation of BMAL1 by PRKCA and inhibits transcriptional activity of the BMAL1-CLOCK heterodimer. Facilitates ligand-independent nuclear translocation of AR following PKC activation, represses AR transactivation activity and is required for phosphorylation of AR by SRC. Modulates IGF1R-dependent integrin signaling and promotes cell spreading and contact with the extracellular matrix. Involved in PKC-dependent translocation of ADAM12 to the cell membrane. Promotes the ubiquitination and proteasome-mediated degradation of proteins such as CLEC1B and HIF1A. Required for VANGL2 membrane localization, inhibits Wnt signaling, and regulates cellular polarization and oriented cell division during gastrulation. Required for PTK2/FAK1 phosphorylation and dephosphorylation. Regulates internalization of the muscarinic receptor CHRM2. Promotes apoptosis by increasing oligomerization of BAX and disrupting the interaction of BAX with the anti-apoptotic factor BCL2L. Inhibits TRPM6 channel activity. Regulates cell surface expression of some GPCRs such as TBXA2R. Plays a role in regulation of FLT1-mediated cell migration. Involved in the transport of ABCB4 from the Golgi to the apical bile canalicular membrane (PubMed:19674157). Promotes migration of breast carcinoma cells by binding to and activating RHOA (PubMed:20499158). Acts as an adapter for the dephosphorylation and inactivation of AKT1 by promoting recruitment of PP2A phosphatase to AKT1 (By similarity).</text>
</comment>
<comment type="function">
    <text evidence="34">(Microbial infection) Binds to Y.pseudotuberculosis yopK which leads to inhibition of phagocytosis and survival of bacteria following infection of host cells.</text>
</comment>
<comment type="function">
    <text evidence="5">(Microbial infection) Enhances phosphorylation of HIV-1 Nef by PKCs.</text>
</comment>
<comment type="function">
    <text evidence="40">(Microbial infection) In case of poxvirus infection, remodels the ribosomes so that they become optimal for the viral mRNAs (containing poly-A leaders) translation but not for host mRNAs.</text>
</comment>
<comment type="function">
    <text evidence="38">(Microbial infection) Contributes to the cap-independent internal ribosome entry site (IRES)-mediated translation by some RNA viruses.</text>
</comment>
<comment type="subunit">
    <text evidence="1 2 4 6 7 10 11 12 14 15 16 17 18 19 20 21 22 23 24 25 26 27 28 29 30 31 32 33 35 36 37 41 43">Monomer; also forms homodimers and homooligomers (PubMed:15140893, PubMed:20529362). Interacts with CPNE3 (PubMed:20010870). May interact with ABCB4 (PubMed:19674157). Component of the small (40S) ribosomal subunit (PubMed:23636399). Interacts with the 80S ribosome (PubMed:23636399). Binds NHERF1. Forms a ternary complex with TRIM63 and PRKCE. Interacts with HABP4, KRT1 and OTUB1. Interacts with SRC (via SH2 domain); the interaction is enhanced by tyrosine phosphorylation of RACK1. Recruited in a circadian manner into a nuclear complex which also includes BMAL1 and PRKCA. Interacts with AR. Interacts with IGF1R but not with INSR. Interacts with ADAM12. Interacts with CLEC1B (via N-terminal region) and with HIF1A; the interaction promotes their degradation. Interacts with RHOA; this enhances RHOA activation and promotes cell migration. Interacts with CHRM2; the interaction regulates CHRM2 internalization. Interacts with TRPM6 (via kinase domain). Interacts with PTK2/FAK1; required for PTK2/FAK1 phosphorylation and dephosphorylation. Interacts with FLT1. Interacts with TBXA2R isoform 2. Interacts with HRAS. Interacts with LARP4B. Interacts with LARP4 (PubMed:21098120). Interacts with PKD2L1. Interacts with isoform 2 of SLC4A7 (PubMed:29743600). Interacts with SLC9A5; this interaction regulates SLC9A5 cell-surface targeting and SLC9A5 activity (PubMed:24006492). Interacts with SLC9A6; this interaction regulates the distribution of SLC9A6 between endosomes and the plasma membrane (PubMed:18057008).</text>
</comment>
<comment type="subunit">
    <text evidence="34">(Microbial infection) Interacts with Y.pseudotuberculosis yopK.</text>
</comment>
<comment type="subunit">
    <text evidence="3 5">(Microbial infection) Interacts with Y.pseudotuberculosis yopK. Interacts with a number of viral proteins including Epstein-Barr virus BZLF1 and HIV-1 Nef; interaction with Nef increases Nef phosphorylation by PKC.</text>
</comment>
<comment type="subunit">
    <text evidence="42">(Microbial infection) Interacts with human respiratory syncytial virus matrix protein M; this interaction suppresses interferon signaling.</text>
</comment>
<comment type="subunit">
    <text evidence="42">(Microbial infection) Interacts with Influenza protein PA-X.</text>
</comment>
<comment type="interaction">
    <interactant intactId="EBI-296739">
        <id>P63244</id>
    </interactant>
    <interactant intactId="EBI-1637793">
        <id>P22303</id>
        <label>ACHE</label>
    </interactant>
    <organismsDiffer>false</organismsDiffer>
    <experiments>2</experiments>
</comment>
<comment type="interaction">
    <interactant intactId="EBI-296739">
        <id>P63244</id>
    </interactant>
    <interactant intactId="EBI-77797">
        <id>P35609</id>
        <label>ACTN2</label>
    </interactant>
    <organismsDiffer>false</organismsDiffer>
    <experiments>3</experiments>
</comment>
<comment type="interaction">
    <interactant intactId="EBI-296739">
        <id>P63244</id>
    </interactant>
    <interactant intactId="EBI-528269">
        <id>Q9UKV8</id>
        <label>AGO2</label>
    </interactant>
    <organismsDiffer>false</organismsDiffer>
    <experiments>2</experiments>
</comment>
<comment type="interaction">
    <interactant intactId="EBI-296739">
        <id>P63244</id>
    </interactant>
    <interactant intactId="EBI-2875665">
        <id>Q96B67</id>
        <label>ARRDC3</label>
    </interactant>
    <organismsDiffer>false</organismsDiffer>
    <experiments>3</experiments>
</comment>
<comment type="interaction">
    <interactant intactId="EBI-296739">
        <id>P63244</id>
    </interactant>
    <interactant intactId="EBI-526406">
        <id>O43521</id>
        <label>BCL2L11</label>
    </interactant>
    <organismsDiffer>false</organismsDiffer>
    <experiments>2</experiments>
</comment>
<comment type="interaction">
    <interactant intactId="EBI-296739">
        <id>P63244</id>
    </interactant>
    <interactant intactId="EBI-358049">
        <id>Q13895</id>
        <label>BYSL</label>
    </interactant>
    <organismsDiffer>false</organismsDiffer>
    <experiments>5</experiments>
</comment>
<comment type="interaction">
    <interactant intactId="EBI-296739">
        <id>P63244</id>
    </interactant>
    <interactant intactId="EBI-743033">
        <id>Q9NZN8</id>
        <label>CNOT2</label>
    </interactant>
    <organismsDiffer>false</organismsDiffer>
    <experiments>3</experiments>
</comment>
<comment type="interaction">
    <interactant intactId="EBI-296739">
        <id>P63244</id>
    </interactant>
    <interactant intactId="EBI-473101">
        <id>Q14194</id>
        <label>CRMP1</label>
    </interactant>
    <organismsDiffer>false</organismsDiffer>
    <experiments>3</experiments>
</comment>
<comment type="interaction">
    <interactant intactId="EBI-296739">
        <id>P63244</id>
    </interactant>
    <interactant intactId="EBI-349105">
        <id>P63167</id>
        <label>DYNLL1</label>
    </interactant>
    <organismsDiffer>false</organismsDiffer>
    <experiments>6</experiments>
</comment>
<comment type="interaction">
    <interactant intactId="EBI-296739">
        <id>P63244</id>
    </interactant>
    <interactant intactId="EBI-923794">
        <id>O75530</id>
        <label>EED</label>
    </interactant>
    <organismsDiffer>false</organismsDiffer>
    <experiments>3</experiments>
</comment>
<comment type="interaction">
    <interactant intactId="EBI-296739">
        <id>P63244</id>
    </interactant>
    <interactant intactId="EBI-914727">
        <id>Q9UKT8</id>
        <label>FBXW2</label>
    </interactant>
    <organismsDiffer>false</organismsDiffer>
    <experiments>11</experiments>
</comment>
<comment type="interaction">
    <interactant intactId="EBI-296739">
        <id>P63244</id>
    </interactant>
    <interactant intactId="EBI-10259069">
        <id>Q86UU5</id>
        <label>GGN</label>
    </interactant>
    <organismsDiffer>false</organismsDiffer>
    <experiments>3</experiments>
</comment>
<comment type="interaction">
    <interactant intactId="EBI-296739">
        <id>P63244</id>
    </interactant>
    <interactant intactId="EBI-2349758">
        <id>Q86WP2</id>
        <label>GPBP1</label>
    </interactant>
    <organismsDiffer>false</organismsDiffer>
    <experiments>3</experiments>
</comment>
<comment type="interaction">
    <interactant intactId="EBI-296739">
        <id>P63244</id>
    </interactant>
    <interactant intactId="EBI-1210654">
        <id>P42694</id>
        <label>HELZ</label>
    </interactant>
    <organismsDiffer>false</organismsDiffer>
    <experiments>5</experiments>
</comment>
<comment type="interaction">
    <interactant intactId="EBI-296739">
        <id>P63244</id>
    </interactant>
    <interactant intactId="EBI-958408">
        <id>P48551</id>
        <label>IFNAR2</label>
    </interactant>
    <organismsDiffer>false</organismsDiffer>
    <experiments>4</experiments>
</comment>
<comment type="interaction">
    <interactant intactId="EBI-296739">
        <id>P63244</id>
    </interactant>
    <interactant intactId="EBI-6509505">
        <id>Q0VD86</id>
        <label>INCA1</label>
    </interactant>
    <organismsDiffer>false</organismsDiffer>
    <experiments>2</experiments>
</comment>
<comment type="interaction">
    <interactant intactId="EBI-296739">
        <id>P63244</id>
    </interactant>
    <interactant intactId="EBI-1052558">
        <id>Q92615</id>
        <label>LARP4B</label>
    </interactant>
    <organismsDiffer>false</organismsDiffer>
    <experiments>7</experiments>
</comment>
<comment type="interaction">
    <interactant intactId="EBI-296739">
        <id>P63244</id>
    </interactant>
    <interactant intactId="EBI-296693">
        <id>Q9Y561</id>
        <label>LRP12</label>
    </interactant>
    <organismsDiffer>false</organismsDiffer>
    <experiments>2</experiments>
</comment>
<comment type="interaction">
    <interactant intactId="EBI-296739">
        <id>P63244</id>
    </interactant>
    <interactant intactId="EBI-79452">
        <id>P07948</id>
        <label>LYN</label>
    </interactant>
    <organismsDiffer>false</organismsDiffer>
    <experiments>2</experiments>
</comment>
<comment type="interaction">
    <interactant intactId="EBI-296739">
        <id>P63244</id>
    </interactant>
    <interactant intactId="EBI-2341005">
        <id>Q9H000</id>
        <label>MKRN2</label>
    </interactant>
    <organismsDiffer>false</organismsDiffer>
    <experiments>3</experiments>
</comment>
<comment type="interaction">
    <interactant intactId="EBI-296739">
        <id>P63244</id>
    </interactant>
    <interactant intactId="EBI-2828115">
        <id>Q9NWQ8</id>
        <label>PAG1</label>
    </interactant>
    <organismsDiffer>false</organismsDiffer>
    <experiments>2</experiments>
</comment>
<comment type="interaction">
    <interactant intactId="EBI-296739">
        <id>P63244</id>
    </interactant>
    <interactant intactId="EBI-1164361">
        <id>Q99497</id>
        <label>PARK7</label>
    </interactant>
    <organismsDiffer>false</organismsDiffer>
    <experiments>4</experiments>
</comment>
<comment type="interaction">
    <interactant intactId="EBI-296739">
        <id>P63244</id>
    </interactant>
    <interactant intactId="EBI-348555">
        <id>O75928</id>
        <label>PIAS2</label>
    </interactant>
    <organismsDiffer>false</organismsDiffer>
    <experiments>2</experiments>
</comment>
<comment type="interaction">
    <interactant intactId="EBI-296739">
        <id>P63244</id>
    </interactant>
    <interactant intactId="EBI-716596">
        <id>Q08752</id>
        <label>PPID</label>
    </interactant>
    <organismsDiffer>false</organismsDiffer>
    <experiments>4</experiments>
</comment>
<comment type="interaction">
    <interactant intactId="EBI-296739">
        <id>P63244</id>
    </interactant>
    <interactant intactId="EBI-296739">
        <id>P63244</id>
        <label>RACK1</label>
    </interactant>
    <organismsDiffer>false</organismsDiffer>
    <experiments>2</experiments>
</comment>
<comment type="interaction">
    <interactant intactId="EBI-296739">
        <id>P63244</id>
    </interactant>
    <interactant intactId="EBI-12946715">
        <id>Q0P631</id>
        <label>TMEM131</label>
    </interactant>
    <organismsDiffer>false</organismsDiffer>
    <experiments>3</experiments>
</comment>
<comment type="interaction">
    <interactant intactId="EBI-296739">
        <id>P63244</id>
    </interactant>
    <interactant intactId="EBI-2510389">
        <id>Q14694</id>
        <label>USP10</label>
    </interactant>
    <organismsDiffer>false</organismsDiffer>
    <experiments>4</experiments>
</comment>
<comment type="interaction">
    <interactant intactId="EBI-296739">
        <id>P63244</id>
    </interactant>
    <interactant intactId="EBI-11975223">
        <id>Q70EL1-9</id>
        <label>USP54</label>
    </interactant>
    <organismsDiffer>false</organismsDiffer>
    <experiments>3</experiments>
</comment>
<comment type="interaction">
    <interactant intactId="EBI-296739">
        <id>P63244</id>
    </interactant>
    <interactant intactId="EBI-301246">
        <id>P40337</id>
        <label>VHL</label>
    </interactant>
    <organismsDiffer>false</organismsDiffer>
    <experiments>9</experiments>
</comment>
<comment type="interaction">
    <interactant intactId="EBI-296739">
        <id>P63244</id>
    </interactant>
    <interactant intactId="EBI-1210440">
        <id>O43309</id>
        <label>ZSCAN12</label>
    </interactant>
    <organismsDiffer>false</organismsDiffer>
    <experiments>3</experiments>
</comment>
<comment type="interaction">
    <interactant intactId="EBI-296739">
        <id>P63244</id>
    </interactant>
    <interactant intactId="EBI-526076">
        <id>O54918-1</id>
        <label>Bcl2l11</label>
    </interactant>
    <organismsDiffer>true</organismsDiffer>
    <experiments>2</experiments>
</comment>
<comment type="interaction">
    <interactant intactId="EBI-296739">
        <id>P63244</id>
    </interactant>
    <interactant intactId="EBI-2621186">
        <id>P03206</id>
        <label>BZLF1</label>
    </interactant>
    <organismsDiffer>true</organismsDiffer>
    <experiments>5</experiments>
</comment>
<comment type="interaction">
    <interactant intactId="EBI-296739">
        <id>P63244</id>
    </interactant>
    <interactant intactId="EBI-52321959">
        <id>O96871</id>
    </interactant>
    <organismsDiffer>true</organismsDiffer>
    <experiments>3</experiments>
</comment>
<comment type="subcellular location">
    <subcellularLocation>
        <location evidence="5 17">Cell membrane</location>
        <topology>Peripheral membrane protein</topology>
    </subcellularLocation>
    <subcellularLocation>
        <location evidence="3 4 10 25 27 30 36 41 42">Cytoplasm</location>
    </subcellularLocation>
    <subcellularLocation>
        <location evidence="4 10">Cytoplasm</location>
        <location evidence="4 10">Perinuclear region</location>
    </subcellularLocation>
    <subcellularLocation>
        <location evidence="3">Nucleus</location>
    </subcellularLocation>
    <subcellularLocation>
        <location evidence="2">Perikaryon</location>
    </subcellularLocation>
    <subcellularLocation>
        <location evidence="2">Cell projection</location>
        <location evidence="2">Dendrite</location>
    </subcellularLocation>
    <subcellularLocation>
        <location evidence="34">Cell projection</location>
        <location evidence="34">Phagocytic cup</location>
    </subcellularLocation>
    <text evidence="2 4 6 17 34">Recruited to the plasma membrane through interaction with KRT1 which binds to membrane-bound ITGB1 (PubMed:17956333). Also associated with the membrane in oncogene-transformed cells (PubMed:11884618). PKC activation induces translocation from the perinuclear region to the cell periphery (PubMed:11279199). In the brain, detected mainly in cell bodies and dendrites with little expression in axonal fibers or nuclei (By similarity). Localized to phagocytic cups following infection by Y.pestis (PubMed:21347310).</text>
</comment>
<comment type="tissue specificity">
    <text evidence="21">In the liver, expressed at higher levels in activated hepatic stellate cells than in hepatocytes or Kupffer cells. Up-regulated in hepatocellular carcinomas and in the adjacent non-tumor liver tissue.</text>
</comment>
<comment type="domain">
    <text evidence="13">The 7 WD repeats mediate protein-protein interactions with binding partners.</text>
</comment>
<comment type="PTM">
    <text evidence="4 8 23">Phosphorylated on Tyr-228 and/or Tyr-246 by SRC. This is required for binding to SRC.</text>
</comment>
<comment type="PTM">
    <text evidence="40">(Microbial infection) Phosphorylated by vaccinia virus B1 kinase on serine and threonine residues; this phosphorylation remodels the ribosome properties, favoring the viral mRNA translation.</text>
</comment>
<comment type="similarity">
    <text evidence="46">Belongs to the WD repeat G protein beta family. Ribosomal protein RACK1 subfamily.</text>
</comment>
<comment type="sequence caution" evidence="46">
    <conflict type="erroneous initiation">
        <sequence resource="EMBL-CDS" id="AAO21313"/>
    </conflict>
    <text>Extended N-terminus.</text>
</comment>
<comment type="sequence caution" evidence="46">
    <conflict type="frameshift">
        <sequence resource="EMBL-CDS" id="AAR24619"/>
    </conflict>
</comment>
<comment type="online information" name="Atlas of Genetics and Cytogenetics in Oncology and Haematology">
    <link uri="https://atlasgeneticsoncology.org/gene/43285/GNB2L1"/>
</comment>
<keyword id="KW-0002">3D-structure</keyword>
<keyword id="KW-0007">Acetylation</keyword>
<keyword id="KW-0053">Apoptosis</keyword>
<keyword id="KW-0090">Biological rhythms</keyword>
<keyword id="KW-0131">Cell cycle</keyword>
<keyword id="KW-1003">Cell membrane</keyword>
<keyword id="KW-0966">Cell projection</keyword>
<keyword id="KW-0963">Cytoplasm</keyword>
<keyword id="KW-0217">Developmental protein</keyword>
<keyword id="KW-0903">Direct protein sequencing</keyword>
<keyword id="KW-0306">Gastrulation</keyword>
<keyword id="KW-0341">Growth regulation</keyword>
<keyword id="KW-0945">Host-virus interaction</keyword>
<keyword id="KW-0472">Membrane</keyword>
<keyword id="KW-0539">Nucleus</keyword>
<keyword id="KW-0597">Phosphoprotein</keyword>
<keyword id="KW-1267">Proteomics identification</keyword>
<keyword id="KW-1185">Reference proteome</keyword>
<keyword id="KW-0677">Repeat</keyword>
<keyword id="KW-0687">Ribonucleoprotein</keyword>
<keyword id="KW-0689">Ribosomal protein</keyword>
<keyword id="KW-0810">Translation regulation</keyword>
<keyword id="KW-0853">WD repeat</keyword>
<name>RACK1_HUMAN</name>
<gene>
    <name evidence="48" type="primary">RACK1</name>
    <name type="synonym">GNB2L1</name>
    <name type="ORF">HLC7</name>
    <name type="ORF">PIG21</name>
</gene>
<proteinExistence type="evidence at protein level"/>
<dbReference type="EMBL" id="M24194">
    <property type="protein sequence ID" value="AAA59626.1"/>
    <property type="molecule type" value="mRNA"/>
</dbReference>
<dbReference type="EMBL" id="AY159316">
    <property type="protein sequence ID" value="AAO21313.1"/>
    <property type="status" value="ALT_INIT"/>
    <property type="molecule type" value="mRNA"/>
</dbReference>
<dbReference type="EMBL" id="AY336089">
    <property type="protein sequence ID" value="AAR24619.1"/>
    <property type="status" value="ALT_FRAME"/>
    <property type="molecule type" value="mRNA"/>
</dbReference>
<dbReference type="EMBL" id="AK095666">
    <property type="protein sequence ID" value="BAG53102.1"/>
    <property type="molecule type" value="mRNA"/>
</dbReference>
<dbReference type="EMBL" id="CR456978">
    <property type="protein sequence ID" value="CAG33259.1"/>
    <property type="molecule type" value="mRNA"/>
</dbReference>
<dbReference type="EMBL" id="CR541909">
    <property type="protein sequence ID" value="CAG46707.1"/>
    <property type="molecule type" value="mRNA"/>
</dbReference>
<dbReference type="EMBL" id="AK222488">
    <property type="protein sequence ID" value="BAD96208.1"/>
    <property type="molecule type" value="mRNA"/>
</dbReference>
<dbReference type="EMBL" id="CH471165">
    <property type="protein sequence ID" value="EAW53692.1"/>
    <property type="molecule type" value="Genomic_DNA"/>
</dbReference>
<dbReference type="EMBL" id="CH471165">
    <property type="protein sequence ID" value="EAW53702.1"/>
    <property type="molecule type" value="Genomic_DNA"/>
</dbReference>
<dbReference type="EMBL" id="BC000214">
    <property type="protein sequence ID" value="AAH00214.1"/>
    <property type="molecule type" value="mRNA"/>
</dbReference>
<dbReference type="EMBL" id="BC000366">
    <property type="protein sequence ID" value="AAH00366.1"/>
    <property type="molecule type" value="mRNA"/>
</dbReference>
<dbReference type="EMBL" id="BC010119">
    <property type="protein sequence ID" value="AAH10119.1"/>
    <property type="molecule type" value="mRNA"/>
</dbReference>
<dbReference type="EMBL" id="BC014256">
    <property type="protein sequence ID" value="AAH14256.1"/>
    <property type="molecule type" value="mRNA"/>
</dbReference>
<dbReference type="EMBL" id="BC014788">
    <property type="protein sequence ID" value="AAH14788.1"/>
    <property type="molecule type" value="mRNA"/>
</dbReference>
<dbReference type="EMBL" id="BC017287">
    <property type="protein sequence ID" value="AAH17287.1"/>
    <property type="molecule type" value="mRNA"/>
</dbReference>
<dbReference type="EMBL" id="BC019093">
    <property type="protein sequence ID" value="AAH19093.1"/>
    <property type="molecule type" value="mRNA"/>
</dbReference>
<dbReference type="EMBL" id="BC019362">
    <property type="protein sequence ID" value="AAH19362.1"/>
    <property type="molecule type" value="mRNA"/>
</dbReference>
<dbReference type="EMBL" id="BC021993">
    <property type="protein sequence ID" value="AAH21993.1"/>
    <property type="molecule type" value="mRNA"/>
</dbReference>
<dbReference type="EMBL" id="BC032006">
    <property type="protein sequence ID" value="AAH32006.1"/>
    <property type="molecule type" value="mRNA"/>
</dbReference>
<dbReference type="CCDS" id="CCDS34324.1"/>
<dbReference type="PIR" id="B33928">
    <property type="entry name" value="B33928"/>
</dbReference>
<dbReference type="RefSeq" id="NP_006089.1">
    <property type="nucleotide sequence ID" value="NM_006098.5"/>
</dbReference>
<dbReference type="PDB" id="4AOW">
    <property type="method" value="X-ray"/>
    <property type="resolution" value="2.45 A"/>
    <property type="chains" value="A/B/C=1-317"/>
</dbReference>
<dbReference type="PDB" id="4UG0">
    <property type="method" value="EM"/>
    <property type="chains" value="Sg=1-317"/>
</dbReference>
<dbReference type="PDB" id="4V5Z">
    <property type="method" value="EM"/>
    <property type="resolution" value="8.70 A"/>
    <property type="chains" value="Aa=1-317"/>
</dbReference>
<dbReference type="PDB" id="4V6X">
    <property type="method" value="EM"/>
    <property type="resolution" value="5.00 A"/>
    <property type="chains" value="Ag=1-317"/>
</dbReference>
<dbReference type="PDB" id="5A2Q">
    <property type="method" value="EM"/>
    <property type="resolution" value="3.90 A"/>
    <property type="chains" value="g=1-315"/>
</dbReference>
<dbReference type="PDB" id="5AJ0">
    <property type="method" value="EM"/>
    <property type="resolution" value="3.50 A"/>
    <property type="chains" value="Bg=1-317"/>
</dbReference>
<dbReference type="PDB" id="5FLX">
    <property type="method" value="EM"/>
    <property type="resolution" value="3.90 A"/>
    <property type="chains" value="g=1-317"/>
</dbReference>
<dbReference type="PDB" id="5LKS">
    <property type="method" value="EM"/>
    <property type="resolution" value="3.60 A"/>
    <property type="chains" value="Sg=1-317"/>
</dbReference>
<dbReference type="PDB" id="5OA3">
    <property type="method" value="EM"/>
    <property type="resolution" value="4.30 A"/>
    <property type="chains" value="g=1-315"/>
</dbReference>
<dbReference type="PDB" id="5T2C">
    <property type="method" value="EM"/>
    <property type="resolution" value="3.60 A"/>
    <property type="chains" value="AI=1-317"/>
</dbReference>
<dbReference type="PDB" id="5VYC">
    <property type="method" value="X-ray"/>
    <property type="resolution" value="6.00 A"/>
    <property type="chains" value="g1/g2/g3/g4/g5/g6=1-317"/>
</dbReference>
<dbReference type="PDB" id="6FEC">
    <property type="method" value="EM"/>
    <property type="resolution" value="6.30 A"/>
    <property type="chains" value="m=2-314"/>
</dbReference>
<dbReference type="PDB" id="6G18">
    <property type="method" value="EM"/>
    <property type="resolution" value="3.60 A"/>
    <property type="chains" value="g=1-317"/>
</dbReference>
<dbReference type="PDB" id="6G51">
    <property type="method" value="EM"/>
    <property type="resolution" value="4.10 A"/>
    <property type="chains" value="g=1-317"/>
</dbReference>
<dbReference type="PDB" id="6G53">
    <property type="method" value="EM"/>
    <property type="resolution" value="4.50 A"/>
    <property type="chains" value="g=1-317"/>
</dbReference>
<dbReference type="PDB" id="6G5H">
    <property type="method" value="EM"/>
    <property type="resolution" value="3.60 A"/>
    <property type="chains" value="g=1-317"/>
</dbReference>
<dbReference type="PDB" id="6G5I">
    <property type="method" value="EM"/>
    <property type="resolution" value="3.50 A"/>
    <property type="chains" value="g=1-317"/>
</dbReference>
<dbReference type="PDB" id="6IP5">
    <property type="method" value="EM"/>
    <property type="resolution" value="3.90 A"/>
    <property type="chains" value="3F=1-317"/>
</dbReference>
<dbReference type="PDB" id="6IP6">
    <property type="method" value="EM"/>
    <property type="resolution" value="4.50 A"/>
    <property type="chains" value="3F=1-317"/>
</dbReference>
<dbReference type="PDB" id="6IP8">
    <property type="method" value="EM"/>
    <property type="resolution" value="3.90 A"/>
    <property type="chains" value="3F=1-317"/>
</dbReference>
<dbReference type="PDB" id="6OLE">
    <property type="method" value="EM"/>
    <property type="resolution" value="3.10 A"/>
    <property type="chains" value="Sg=3-314"/>
</dbReference>
<dbReference type="PDB" id="6OLF">
    <property type="method" value="EM"/>
    <property type="resolution" value="3.90 A"/>
    <property type="chains" value="Sg=3-314"/>
</dbReference>
<dbReference type="PDB" id="6OLG">
    <property type="method" value="EM"/>
    <property type="resolution" value="3.40 A"/>
    <property type="chains" value="Bg=2-315"/>
</dbReference>
<dbReference type="PDB" id="6OLI">
    <property type="method" value="EM"/>
    <property type="resolution" value="3.50 A"/>
    <property type="chains" value="Sg=3-314"/>
</dbReference>
<dbReference type="PDB" id="6OLZ">
    <property type="method" value="EM"/>
    <property type="resolution" value="3.90 A"/>
    <property type="chains" value="Bg=2-315"/>
</dbReference>
<dbReference type="PDB" id="6OM0">
    <property type="method" value="EM"/>
    <property type="resolution" value="3.10 A"/>
    <property type="chains" value="Sg=3-314"/>
</dbReference>
<dbReference type="PDB" id="6OM7">
    <property type="method" value="EM"/>
    <property type="resolution" value="3.70 A"/>
    <property type="chains" value="Sg=3-314"/>
</dbReference>
<dbReference type="PDB" id="6QZP">
    <property type="method" value="EM"/>
    <property type="resolution" value="2.90 A"/>
    <property type="chains" value="Sg=2-314"/>
</dbReference>
<dbReference type="PDB" id="6XA1">
    <property type="method" value="EM"/>
    <property type="resolution" value="2.80 A"/>
    <property type="chains" value="Sg=2-314"/>
</dbReference>
<dbReference type="PDB" id="6Y0G">
    <property type="method" value="EM"/>
    <property type="resolution" value="3.20 A"/>
    <property type="chains" value="Sg=1-317"/>
</dbReference>
<dbReference type="PDB" id="6Y2L">
    <property type="method" value="EM"/>
    <property type="resolution" value="3.00 A"/>
    <property type="chains" value="Sg=1-317"/>
</dbReference>
<dbReference type="PDB" id="6Y57">
    <property type="method" value="EM"/>
    <property type="resolution" value="3.50 A"/>
    <property type="chains" value="Sg=1-317"/>
</dbReference>
<dbReference type="PDB" id="6YBS">
    <property type="method" value="EM"/>
    <property type="resolution" value="3.10 A"/>
    <property type="chains" value="c=1-317"/>
</dbReference>
<dbReference type="PDB" id="6Z6L">
    <property type="method" value="EM"/>
    <property type="resolution" value="3.00 A"/>
    <property type="chains" value="Sg=1-317"/>
</dbReference>
<dbReference type="PDB" id="6Z6M">
    <property type="method" value="EM"/>
    <property type="resolution" value="3.10 A"/>
    <property type="chains" value="Sg=1-317"/>
</dbReference>
<dbReference type="PDB" id="6Z6N">
    <property type="method" value="EM"/>
    <property type="resolution" value="2.90 A"/>
    <property type="chains" value="Sg=1-317"/>
</dbReference>
<dbReference type="PDB" id="6ZLW">
    <property type="method" value="EM"/>
    <property type="resolution" value="2.60 A"/>
    <property type="chains" value="j=1-317"/>
</dbReference>
<dbReference type="PDB" id="6ZM7">
    <property type="method" value="EM"/>
    <property type="resolution" value="2.70 A"/>
    <property type="chains" value="Sg=1-317"/>
</dbReference>
<dbReference type="PDB" id="6ZME">
    <property type="method" value="EM"/>
    <property type="resolution" value="3.00 A"/>
    <property type="chains" value="Sg=1-317"/>
</dbReference>
<dbReference type="PDB" id="6ZMI">
    <property type="method" value="EM"/>
    <property type="resolution" value="2.60 A"/>
    <property type="chains" value="Sg=1-317"/>
</dbReference>
<dbReference type="PDB" id="6ZMO">
    <property type="method" value="EM"/>
    <property type="resolution" value="3.10 A"/>
    <property type="chains" value="Sg=1-317"/>
</dbReference>
<dbReference type="PDB" id="6ZMT">
    <property type="method" value="EM"/>
    <property type="resolution" value="3.00 A"/>
    <property type="chains" value="j=1-317"/>
</dbReference>
<dbReference type="PDB" id="6ZMW">
    <property type="method" value="EM"/>
    <property type="resolution" value="3.70 A"/>
    <property type="chains" value="c=1-317"/>
</dbReference>
<dbReference type="PDB" id="6ZN5">
    <property type="method" value="EM"/>
    <property type="resolution" value="3.20 A"/>
    <property type="chains" value="j=2-315"/>
</dbReference>
<dbReference type="PDB" id="6ZOJ">
    <property type="method" value="EM"/>
    <property type="resolution" value="2.80 A"/>
    <property type="chains" value="g=1-315"/>
</dbReference>
<dbReference type="PDB" id="6ZOL">
    <property type="method" value="EM"/>
    <property type="resolution" value="2.80 A"/>
    <property type="chains" value="g=1-315"/>
</dbReference>
<dbReference type="PDB" id="6ZON">
    <property type="method" value="EM"/>
    <property type="resolution" value="3.00 A"/>
    <property type="chains" value="V=1-317"/>
</dbReference>
<dbReference type="PDB" id="6ZP4">
    <property type="method" value="EM"/>
    <property type="resolution" value="2.90 A"/>
    <property type="chains" value="V=1-317"/>
</dbReference>
<dbReference type="PDB" id="6ZUO">
    <property type="method" value="EM"/>
    <property type="resolution" value="3.10 A"/>
    <property type="chains" value="g=1-317"/>
</dbReference>
<dbReference type="PDB" id="6ZV6">
    <property type="method" value="EM"/>
    <property type="resolution" value="2.90 A"/>
    <property type="chains" value="g=1-317"/>
</dbReference>
<dbReference type="PDB" id="6ZVH">
    <property type="method" value="EM"/>
    <property type="resolution" value="2.90 A"/>
    <property type="chains" value="g=2-314"/>
</dbReference>
<dbReference type="PDB" id="6ZVJ">
    <property type="method" value="EM"/>
    <property type="resolution" value="3.80 A"/>
    <property type="chains" value="V=4-312"/>
</dbReference>
<dbReference type="PDB" id="6ZXD">
    <property type="method" value="EM"/>
    <property type="resolution" value="3.20 A"/>
    <property type="chains" value="g=1-317"/>
</dbReference>
<dbReference type="PDB" id="6ZXE">
    <property type="method" value="EM"/>
    <property type="resolution" value="3.00 A"/>
    <property type="chains" value="g=1-317"/>
</dbReference>
<dbReference type="PDB" id="6ZXF">
    <property type="method" value="EM"/>
    <property type="resolution" value="3.70 A"/>
    <property type="chains" value="g=1-317"/>
</dbReference>
<dbReference type="PDB" id="6ZXG">
    <property type="method" value="EM"/>
    <property type="resolution" value="2.60 A"/>
    <property type="chains" value="g=1-317"/>
</dbReference>
<dbReference type="PDB" id="6ZXH">
    <property type="method" value="EM"/>
    <property type="resolution" value="2.70 A"/>
    <property type="chains" value="g=1-317"/>
</dbReference>
<dbReference type="PDB" id="7A09">
    <property type="method" value="EM"/>
    <property type="resolution" value="3.50 A"/>
    <property type="chains" value="V=1-317"/>
</dbReference>
<dbReference type="PDB" id="7K5I">
    <property type="method" value="EM"/>
    <property type="resolution" value="2.90 A"/>
    <property type="chains" value="g=1-317"/>
</dbReference>
<dbReference type="PDB" id="7QP6">
    <property type="method" value="EM"/>
    <property type="resolution" value="4.70 A"/>
    <property type="chains" value="c=1-317"/>
</dbReference>
<dbReference type="PDB" id="7QP7">
    <property type="method" value="EM"/>
    <property type="resolution" value="3.70 A"/>
    <property type="chains" value="c=1-317"/>
</dbReference>
<dbReference type="PDB" id="7R4X">
    <property type="method" value="EM"/>
    <property type="resolution" value="2.15 A"/>
    <property type="chains" value="g=1-317"/>
</dbReference>
<dbReference type="PDB" id="7TQL">
    <property type="method" value="EM"/>
    <property type="resolution" value="3.40 A"/>
    <property type="chains" value="j=2-315"/>
</dbReference>
<dbReference type="PDB" id="7XNX">
    <property type="method" value="EM"/>
    <property type="resolution" value="2.70 A"/>
    <property type="chains" value="Sg=1-317"/>
</dbReference>
<dbReference type="PDB" id="7XNY">
    <property type="method" value="EM"/>
    <property type="resolution" value="2.50 A"/>
    <property type="chains" value="Sg=1-317"/>
</dbReference>
<dbReference type="PDB" id="8G5Y">
    <property type="method" value="EM"/>
    <property type="resolution" value="2.29 A"/>
    <property type="chains" value="Sg=1-317"/>
</dbReference>
<dbReference type="PDB" id="8G5Z">
    <property type="method" value="EM"/>
    <property type="resolution" value="2.64 A"/>
    <property type="chains" value="Sg=2-314"/>
</dbReference>
<dbReference type="PDB" id="8G60">
    <property type="method" value="EM"/>
    <property type="resolution" value="2.54 A"/>
    <property type="chains" value="Sg=1-317"/>
</dbReference>
<dbReference type="PDB" id="8G61">
    <property type="method" value="EM"/>
    <property type="resolution" value="2.94 A"/>
    <property type="chains" value="Sg=1-317"/>
</dbReference>
<dbReference type="PDB" id="8G6J">
    <property type="method" value="EM"/>
    <property type="resolution" value="2.80 A"/>
    <property type="chains" value="Sg=1-317"/>
</dbReference>
<dbReference type="PDB" id="8GLP">
    <property type="method" value="EM"/>
    <property type="resolution" value="1.67 A"/>
    <property type="chains" value="Sg=1-317"/>
</dbReference>
<dbReference type="PDB" id="8IFD">
    <property type="method" value="EM"/>
    <property type="resolution" value="2.59 A"/>
    <property type="chains" value="3F=1-317"/>
</dbReference>
<dbReference type="PDB" id="8IFE">
    <property type="method" value="EM"/>
    <property type="resolution" value="2.57 A"/>
    <property type="chains" value="3F=1-317"/>
</dbReference>
<dbReference type="PDB" id="8JDJ">
    <property type="method" value="EM"/>
    <property type="resolution" value="2.50 A"/>
    <property type="chains" value="AR=1-317"/>
</dbReference>
<dbReference type="PDB" id="8JDK">
    <property type="method" value="EM"/>
    <property type="resolution" value="2.26 A"/>
    <property type="chains" value="AR=1-317"/>
</dbReference>
<dbReference type="PDB" id="8JDL">
    <property type="method" value="EM"/>
    <property type="resolution" value="2.42 A"/>
    <property type="chains" value="AR=1-317"/>
</dbReference>
<dbReference type="PDB" id="8JDM">
    <property type="method" value="EM"/>
    <property type="resolution" value="2.67 A"/>
    <property type="chains" value="AR=1-317"/>
</dbReference>
<dbReference type="PDB" id="8K2C">
    <property type="method" value="EM"/>
    <property type="resolution" value="2.40 A"/>
    <property type="chains" value="Sg=1-317"/>
</dbReference>
<dbReference type="PDB" id="8OZ0">
    <property type="method" value="EM"/>
    <property type="resolution" value="3.50 A"/>
    <property type="chains" value="k=1-317"/>
</dbReference>
<dbReference type="PDB" id="8PJ1">
    <property type="method" value="EM"/>
    <property type="resolution" value="3.40 A"/>
    <property type="chains" value="c=1-317"/>
</dbReference>
<dbReference type="PDB" id="8PJ2">
    <property type="method" value="EM"/>
    <property type="resolution" value="3.40 A"/>
    <property type="chains" value="c=1-317"/>
</dbReference>
<dbReference type="PDB" id="8PJ3">
    <property type="method" value="EM"/>
    <property type="resolution" value="3.70 A"/>
    <property type="chains" value="c=1-317"/>
</dbReference>
<dbReference type="PDB" id="8PJ4">
    <property type="method" value="EM"/>
    <property type="resolution" value="3.20 A"/>
    <property type="chains" value="c=1-317"/>
</dbReference>
<dbReference type="PDB" id="8PJ5">
    <property type="method" value="EM"/>
    <property type="resolution" value="2.90 A"/>
    <property type="chains" value="c=1-317"/>
</dbReference>
<dbReference type="PDB" id="8PJ6">
    <property type="method" value="EM"/>
    <property type="resolution" value="2.90 A"/>
    <property type="chains" value="c=1-317"/>
</dbReference>
<dbReference type="PDB" id="8PPK">
    <property type="method" value="EM"/>
    <property type="resolution" value="2.98 A"/>
    <property type="chains" value="g=1-317"/>
</dbReference>
<dbReference type="PDB" id="8PPL">
    <property type="method" value="EM"/>
    <property type="resolution" value="2.65 A"/>
    <property type="chains" value="Ag=1-317"/>
</dbReference>
<dbReference type="PDB" id="8QOI">
    <property type="method" value="EM"/>
    <property type="resolution" value="1.90 A"/>
    <property type="chains" value="Sg=1-317"/>
</dbReference>
<dbReference type="PDB" id="8T4S">
    <property type="method" value="EM"/>
    <property type="resolution" value="2.60 A"/>
    <property type="chains" value="g=1-317"/>
</dbReference>
<dbReference type="PDB" id="8UKB">
    <property type="method" value="EM"/>
    <property type="resolution" value="3.05 A"/>
    <property type="chains" value="Sg=2-314"/>
</dbReference>
<dbReference type="PDB" id="8XP2">
    <property type="method" value="EM"/>
    <property type="resolution" value="3.20 A"/>
    <property type="chains" value="Sg=1-317"/>
</dbReference>
<dbReference type="PDB" id="8XP3">
    <property type="method" value="EM"/>
    <property type="resolution" value="3.40 A"/>
    <property type="chains" value="Sg=1-317"/>
</dbReference>
<dbReference type="PDB" id="8XSX">
    <property type="method" value="EM"/>
    <property type="resolution" value="2.40 A"/>
    <property type="chains" value="Sg=1-317"/>
</dbReference>
<dbReference type="PDB" id="8XSY">
    <property type="method" value="EM"/>
    <property type="resolution" value="3.00 A"/>
    <property type="chains" value="Sg=1-317"/>
</dbReference>
<dbReference type="PDB" id="8XSZ">
    <property type="method" value="EM"/>
    <property type="resolution" value="3.20 A"/>
    <property type="chains" value="Sg=1-317"/>
</dbReference>
<dbReference type="PDB" id="8XXL">
    <property type="method" value="EM"/>
    <property type="resolution" value="2.90 A"/>
    <property type="chains" value="Sg=1-317"/>
</dbReference>
<dbReference type="PDB" id="8XXM">
    <property type="method" value="EM"/>
    <property type="resolution" value="3.20 A"/>
    <property type="chains" value="Sg=1-317"/>
</dbReference>
<dbReference type="PDB" id="8XXN">
    <property type="method" value="EM"/>
    <property type="resolution" value="3.60 A"/>
    <property type="chains" value="Sg=1-317"/>
</dbReference>
<dbReference type="PDB" id="8Y0W">
    <property type="method" value="EM"/>
    <property type="resolution" value="3.40 A"/>
    <property type="chains" value="Sg=1-317"/>
</dbReference>
<dbReference type="PDB" id="8Y0X">
    <property type="method" value="EM"/>
    <property type="resolution" value="3.30 A"/>
    <property type="chains" value="Sg=1-317"/>
</dbReference>
<dbReference type="PDB" id="8YOO">
    <property type="method" value="EM"/>
    <property type="resolution" value="2.00 A"/>
    <property type="chains" value="Sg=1-317"/>
</dbReference>
<dbReference type="PDB" id="8YOP">
    <property type="method" value="EM"/>
    <property type="resolution" value="2.20 A"/>
    <property type="chains" value="Sg=1-317"/>
</dbReference>
<dbReference type="PDB" id="8ZDB">
    <property type="method" value="EM"/>
    <property type="resolution" value="3.60 A"/>
    <property type="chains" value="g=1-317"/>
</dbReference>
<dbReference type="PDB" id="8ZDC">
    <property type="method" value="EM"/>
    <property type="resolution" value="3.80 A"/>
    <property type="chains" value="g=1-317"/>
</dbReference>
<dbReference type="PDB" id="8ZDD">
    <property type="method" value="EM"/>
    <property type="resolution" value="3.70 A"/>
    <property type="chains" value="g=1-317"/>
</dbReference>
<dbReference type="PDB" id="9BKD">
    <property type="method" value="EM"/>
    <property type="resolution" value="2.60 A"/>
    <property type="chains" value="c=1-317"/>
</dbReference>
<dbReference type="PDB" id="9BLN">
    <property type="method" value="EM"/>
    <property type="resolution" value="3.90 A"/>
    <property type="chains" value="c=1-317"/>
</dbReference>
<dbReference type="PDB" id="9C3H">
    <property type="method" value="EM"/>
    <property type="resolution" value="2.00 A"/>
    <property type="chains" value="Sg=1-317"/>
</dbReference>
<dbReference type="PDB" id="9G8M">
    <property type="method" value="EM"/>
    <property type="resolution" value="3.30 A"/>
    <property type="chains" value="Sg=1-317"/>
</dbReference>
<dbReference type="PDB" id="9G8O">
    <property type="method" value="EM"/>
    <property type="resolution" value="3.40 A"/>
    <property type="chains" value="Sg=1-317"/>
</dbReference>
<dbReference type="PDBsum" id="4AOW"/>
<dbReference type="PDBsum" id="4UG0"/>
<dbReference type="PDBsum" id="4V5Z"/>
<dbReference type="PDBsum" id="4V6X"/>
<dbReference type="PDBsum" id="5A2Q"/>
<dbReference type="PDBsum" id="5AJ0"/>
<dbReference type="PDBsum" id="5FLX"/>
<dbReference type="PDBsum" id="5LKS"/>
<dbReference type="PDBsum" id="5OA3"/>
<dbReference type="PDBsum" id="5T2C"/>
<dbReference type="PDBsum" id="5VYC"/>
<dbReference type="PDBsum" id="6FEC"/>
<dbReference type="PDBsum" id="6G18"/>
<dbReference type="PDBsum" id="6G51"/>
<dbReference type="PDBsum" id="6G53"/>
<dbReference type="PDBsum" id="6G5H"/>
<dbReference type="PDBsum" id="6G5I"/>
<dbReference type="PDBsum" id="6IP5"/>
<dbReference type="PDBsum" id="6IP6"/>
<dbReference type="PDBsum" id="6IP8"/>
<dbReference type="PDBsum" id="6OLE"/>
<dbReference type="PDBsum" id="6OLF"/>
<dbReference type="PDBsum" id="6OLG"/>
<dbReference type="PDBsum" id="6OLI"/>
<dbReference type="PDBsum" id="6OLZ"/>
<dbReference type="PDBsum" id="6OM0"/>
<dbReference type="PDBsum" id="6OM7"/>
<dbReference type="PDBsum" id="6QZP"/>
<dbReference type="PDBsum" id="6XA1"/>
<dbReference type="PDBsum" id="6Y0G"/>
<dbReference type="PDBsum" id="6Y2L"/>
<dbReference type="PDBsum" id="6Y57"/>
<dbReference type="PDBsum" id="6YBS"/>
<dbReference type="PDBsum" id="6Z6L"/>
<dbReference type="PDBsum" id="6Z6M"/>
<dbReference type="PDBsum" id="6Z6N"/>
<dbReference type="PDBsum" id="6ZLW"/>
<dbReference type="PDBsum" id="6ZM7"/>
<dbReference type="PDBsum" id="6ZME"/>
<dbReference type="PDBsum" id="6ZMI"/>
<dbReference type="PDBsum" id="6ZMO"/>
<dbReference type="PDBsum" id="6ZMT"/>
<dbReference type="PDBsum" id="6ZMW"/>
<dbReference type="PDBsum" id="6ZN5"/>
<dbReference type="PDBsum" id="6ZOJ"/>
<dbReference type="PDBsum" id="6ZOL"/>
<dbReference type="PDBsum" id="6ZON"/>
<dbReference type="PDBsum" id="6ZP4"/>
<dbReference type="PDBsum" id="6ZUO"/>
<dbReference type="PDBsum" id="6ZV6"/>
<dbReference type="PDBsum" id="6ZVH"/>
<dbReference type="PDBsum" id="6ZVJ"/>
<dbReference type="PDBsum" id="6ZXD"/>
<dbReference type="PDBsum" id="6ZXE"/>
<dbReference type="PDBsum" id="6ZXF"/>
<dbReference type="PDBsum" id="6ZXG"/>
<dbReference type="PDBsum" id="6ZXH"/>
<dbReference type="PDBsum" id="7A09"/>
<dbReference type="PDBsum" id="7K5I"/>
<dbReference type="PDBsum" id="7QP6"/>
<dbReference type="PDBsum" id="7QP7"/>
<dbReference type="PDBsum" id="7R4X"/>
<dbReference type="PDBsum" id="7TQL"/>
<dbReference type="PDBsum" id="7XNX"/>
<dbReference type="PDBsum" id="7XNY"/>
<dbReference type="PDBsum" id="8G5Y"/>
<dbReference type="PDBsum" id="8G5Z"/>
<dbReference type="PDBsum" id="8G60"/>
<dbReference type="PDBsum" id="8G61"/>
<dbReference type="PDBsum" id="8G6J"/>
<dbReference type="PDBsum" id="8GLP"/>
<dbReference type="PDBsum" id="8IFD"/>
<dbReference type="PDBsum" id="8IFE"/>
<dbReference type="PDBsum" id="8JDJ"/>
<dbReference type="PDBsum" id="8JDK"/>
<dbReference type="PDBsum" id="8JDL"/>
<dbReference type="PDBsum" id="8JDM"/>
<dbReference type="PDBsum" id="8K2C"/>
<dbReference type="PDBsum" id="8OZ0"/>
<dbReference type="PDBsum" id="8PJ1"/>
<dbReference type="PDBsum" id="8PJ2"/>
<dbReference type="PDBsum" id="8PJ3"/>
<dbReference type="PDBsum" id="8PJ4"/>
<dbReference type="PDBsum" id="8PJ5"/>
<dbReference type="PDBsum" id="8PJ6"/>
<dbReference type="PDBsum" id="8PPK"/>
<dbReference type="PDBsum" id="8PPL"/>
<dbReference type="PDBsum" id="8QOI"/>
<dbReference type="PDBsum" id="8T4S"/>
<dbReference type="PDBsum" id="8UKB"/>
<dbReference type="PDBsum" id="8XP2"/>
<dbReference type="PDBsum" id="8XP3"/>
<dbReference type="PDBsum" id="8XSX"/>
<dbReference type="PDBsum" id="8XSY"/>
<dbReference type="PDBsum" id="8XSZ"/>
<dbReference type="PDBsum" id="8XXL"/>
<dbReference type="PDBsum" id="8XXM"/>
<dbReference type="PDBsum" id="8XXN"/>
<dbReference type="PDBsum" id="8Y0W"/>
<dbReference type="PDBsum" id="8Y0X"/>
<dbReference type="PDBsum" id="8YOO"/>
<dbReference type="PDBsum" id="8YOP"/>
<dbReference type="PDBsum" id="8ZDB"/>
<dbReference type="PDBsum" id="8ZDC"/>
<dbReference type="PDBsum" id="8ZDD"/>
<dbReference type="PDBsum" id="9BKD"/>
<dbReference type="PDBsum" id="9BLN"/>
<dbReference type="PDBsum" id="9C3H"/>
<dbReference type="PDBsum" id="9G8M"/>
<dbReference type="PDBsum" id="9G8O"/>
<dbReference type="EMDB" id="EMD-10668"/>
<dbReference type="EMDB" id="EMD-10674"/>
<dbReference type="EMDB" id="EMD-10690"/>
<dbReference type="EMDB" id="EMD-10772"/>
<dbReference type="EMDB" id="EMD-11098"/>
<dbReference type="EMDB" id="EMD-11099"/>
<dbReference type="EMDB" id="EMD-11100"/>
<dbReference type="EMDB" id="EMD-11276"/>
<dbReference type="EMDB" id="EMD-11288"/>
<dbReference type="EMDB" id="EMD-11289"/>
<dbReference type="EMDB" id="EMD-11292"/>
<dbReference type="EMDB" id="EMD-11299"/>
<dbReference type="EMDB" id="EMD-11301"/>
<dbReference type="EMDB" id="EMD-11302"/>
<dbReference type="EMDB" id="EMD-11310"/>
<dbReference type="EMDB" id="EMD-11320"/>
<dbReference type="EMDB" id="EMD-11322"/>
<dbReference type="EMDB" id="EMD-11325"/>
<dbReference type="EMDB" id="EMD-11335"/>
<dbReference type="EMDB" id="EMD-11440"/>
<dbReference type="EMDB" id="EMD-11441"/>
<dbReference type="EMDB" id="EMD-11456"/>
<dbReference type="EMDB" id="EMD-11458"/>
<dbReference type="EMDB" id="EMD-11517"/>
<dbReference type="EMDB" id="EMD-11518"/>
<dbReference type="EMDB" id="EMD-11519"/>
<dbReference type="EMDB" id="EMD-11520"/>
<dbReference type="EMDB" id="EMD-11521"/>
<dbReference type="EMDB" id="EMD-11602"/>
<dbReference type="EMDB" id="EMD-14113"/>
<dbReference type="EMDB" id="EMD-14114"/>
<dbReference type="EMDB" id="EMD-14317"/>
<dbReference type="EMDB" id="EMD-17297"/>
<dbReference type="EMDB" id="EMD-17696"/>
<dbReference type="EMDB" id="EMD-17697"/>
<dbReference type="EMDB" id="EMD-17698"/>
<dbReference type="EMDB" id="EMD-17699"/>
<dbReference type="EMDB" id="EMD-17700"/>
<dbReference type="EMDB" id="EMD-17701"/>
<dbReference type="EMDB" id="EMD-17804"/>
<dbReference type="EMDB" id="EMD-17805"/>
<dbReference type="EMDB" id="EMD-18539"/>
<dbReference type="EMDB" id="EMD-22681"/>
<dbReference type="EMDB" id="EMD-26067"/>
<dbReference type="EMDB" id="EMD-29757"/>
<dbReference type="EMDB" id="EMD-29758"/>
<dbReference type="EMDB" id="EMD-29759"/>
<dbReference type="EMDB" id="EMD-29760"/>
<dbReference type="EMDB" id="EMD-29771"/>
<dbReference type="EMDB" id="EMD-33329"/>
<dbReference type="EMDB" id="EMD-33330"/>
<dbReference type="EMDB" id="EMD-35413"/>
<dbReference type="EMDB" id="EMD-35414"/>
<dbReference type="EMDB" id="EMD-36178"/>
<dbReference type="EMDB" id="EMD-36179"/>
<dbReference type="EMDB" id="EMD-36180"/>
<dbReference type="EMDB" id="EMD-36181"/>
<dbReference type="EMDB" id="EMD-36838"/>
<dbReference type="EMDB" id="EMD-3770"/>
<dbReference type="EMDB" id="EMD-38548"/>
<dbReference type="EMDB" id="EMD-38549"/>
<dbReference type="EMDB" id="EMD-38629"/>
<dbReference type="EMDB" id="EMD-38630"/>
<dbReference type="EMDB" id="EMD-38631"/>
<dbReference type="EMDB" id="EMD-38752"/>
<dbReference type="EMDB" id="EMD-38753"/>
<dbReference type="EMDB" id="EMD-38754"/>
<dbReference type="EMDB" id="EMD-3883"/>
<dbReference type="EMDB" id="EMD-39455"/>
<dbReference type="EMDB" id="EMD-39456"/>
<dbReference type="EMDB" id="EMD-39956"/>
<dbReference type="EMDB" id="EMD-39957"/>
<dbReference type="EMDB" id="EMD-39958"/>
<dbReference type="EMDB" id="EMD-40205"/>
<dbReference type="EMDB" id="EMD-4070"/>
<dbReference type="EMDB" id="EMD-41039"/>
<dbReference type="EMDB" id="EMD-42351"/>
<dbReference type="EMDB" id="EMD-4242"/>
<dbReference type="EMDB" id="EMD-4337"/>
<dbReference type="EMDB" id="EMD-4350"/>
<dbReference type="EMDB" id="EMD-4351"/>
<dbReference type="EMDB" id="EMD-4352"/>
<dbReference type="EMDB" id="EMD-4353"/>
<dbReference type="EMDB" id="EMD-44641"/>
<dbReference type="EMDB" id="EMD-44671"/>
<dbReference type="EMDB" id="EMD-45170"/>
<dbReference type="EMDB" id="EMD-51132"/>
<dbReference type="EMDB" id="EMD-51134"/>
<dbReference type="EMDB" id="EMD-9701"/>
<dbReference type="EMDB" id="EMD-9702"/>
<dbReference type="EMDB" id="EMD-9703"/>
<dbReference type="SMR" id="P63244"/>
<dbReference type="BioGRID" id="115671">
    <property type="interactions" value="701"/>
</dbReference>
<dbReference type="ComplexPortal" id="CPX-5223">
    <property type="entry name" value="40S cytosolic small ribosomal subunit"/>
</dbReference>
<dbReference type="CORUM" id="P63244"/>
<dbReference type="DIP" id="DIP-46736N"/>
<dbReference type="FunCoup" id="P63244">
    <property type="interactions" value="1792"/>
</dbReference>
<dbReference type="IntAct" id="P63244">
    <property type="interactions" value="418"/>
</dbReference>
<dbReference type="MINT" id="P63244"/>
<dbReference type="STRING" id="9606.ENSP00000426909"/>
<dbReference type="DrugBank" id="DB09130">
    <property type="generic name" value="Copper"/>
</dbReference>
<dbReference type="TCDB" id="8.A.92.1.4">
    <property type="family name" value="the g-protein AlphaBetaGama complex (gpc) family"/>
</dbReference>
<dbReference type="GlyCosmos" id="P63244">
    <property type="glycosylation" value="4 sites, 1 glycan"/>
</dbReference>
<dbReference type="GlyGen" id="P63244">
    <property type="glycosylation" value="4 sites, 1 O-linked glycan (4 sites)"/>
</dbReference>
<dbReference type="iPTMnet" id="P63244"/>
<dbReference type="MetOSite" id="P63244"/>
<dbReference type="PhosphoSitePlus" id="P63244"/>
<dbReference type="SwissPalm" id="P63244"/>
<dbReference type="BioMuta" id="RACK1"/>
<dbReference type="DMDM" id="54037168"/>
<dbReference type="REPRODUCTION-2DPAGE" id="IPI00848226"/>
<dbReference type="REPRODUCTION-2DPAGE" id="P63244"/>
<dbReference type="CPTAC" id="CPTAC-379"/>
<dbReference type="CPTAC" id="CPTAC-380"/>
<dbReference type="jPOST" id="P63244"/>
<dbReference type="MassIVE" id="P63244"/>
<dbReference type="PaxDb" id="9606-ENSP00000426909"/>
<dbReference type="PeptideAtlas" id="P63244"/>
<dbReference type="PRIDE" id="P63244"/>
<dbReference type="ProteomicsDB" id="57512"/>
<dbReference type="Pumba" id="P63244"/>
<dbReference type="TopDownProteomics" id="P63244"/>
<dbReference type="Antibodypedia" id="3802">
    <property type="antibodies" value="464 antibodies from 44 providers"/>
</dbReference>
<dbReference type="DNASU" id="10399"/>
<dbReference type="Ensembl" id="ENST00000512805.6">
    <property type="protein sequence ID" value="ENSP00000426909.1"/>
    <property type="gene ID" value="ENSG00000204628.12"/>
</dbReference>
<dbReference type="GeneID" id="10399"/>
<dbReference type="KEGG" id="hsa:10399"/>
<dbReference type="MANE-Select" id="ENST00000512805.6">
    <property type="protein sequence ID" value="ENSP00000426909.1"/>
    <property type="RefSeq nucleotide sequence ID" value="NM_006098.5"/>
    <property type="RefSeq protein sequence ID" value="NP_006089.1"/>
</dbReference>
<dbReference type="UCSC" id="uc003mni.2">
    <property type="organism name" value="human"/>
</dbReference>
<dbReference type="AGR" id="HGNC:4399"/>
<dbReference type="CTD" id="10399"/>
<dbReference type="DisGeNET" id="10399"/>
<dbReference type="GeneCards" id="RACK1"/>
<dbReference type="HGNC" id="HGNC:4399">
    <property type="gene designation" value="RACK1"/>
</dbReference>
<dbReference type="HPA" id="ENSG00000204628">
    <property type="expression patterns" value="Low tissue specificity"/>
</dbReference>
<dbReference type="MIM" id="176981">
    <property type="type" value="gene"/>
</dbReference>
<dbReference type="neXtProt" id="NX_P63244"/>
<dbReference type="OpenTargets" id="ENSG00000204628"/>
<dbReference type="PharmGKB" id="PA28779"/>
<dbReference type="VEuPathDB" id="HostDB:ENSG00000204628"/>
<dbReference type="eggNOG" id="KOG0279">
    <property type="taxonomic scope" value="Eukaryota"/>
</dbReference>
<dbReference type="GeneTree" id="ENSGT00940000154461"/>
<dbReference type="InParanoid" id="P63244"/>
<dbReference type="OMA" id="NCKLKIN"/>
<dbReference type="OrthoDB" id="7875889at2759"/>
<dbReference type="PAN-GO" id="P63244">
    <property type="GO annotations" value="6 GO annotations based on evolutionary models"/>
</dbReference>
<dbReference type="PhylomeDB" id="P63244"/>
<dbReference type="TreeFam" id="TF300600"/>
<dbReference type="PathwayCommons" id="P63244"/>
<dbReference type="Reactome" id="R-HSA-5357905">
    <property type="pathway name" value="Regulation of TNFR1 signaling"/>
</dbReference>
<dbReference type="Reactome" id="R-HSA-5357956">
    <property type="pathway name" value="TNFR1-induced NF-kappa-B signaling pathway"/>
</dbReference>
<dbReference type="Reactome" id="R-HSA-5626978">
    <property type="pathway name" value="TNFR1-mediated ceramide production"/>
</dbReference>
<dbReference type="SignaLink" id="P63244"/>
<dbReference type="SIGNOR" id="P63244"/>
<dbReference type="BioGRID-ORCS" id="10399">
    <property type="hits" value="855 hits in 1158 CRISPR screens"/>
</dbReference>
<dbReference type="CD-CODE" id="91857CE7">
    <property type="entry name" value="Nucleolus"/>
</dbReference>
<dbReference type="CD-CODE" id="DEE660B4">
    <property type="entry name" value="Stress granule"/>
</dbReference>
<dbReference type="ChiTaRS" id="RACK1">
    <property type="organism name" value="human"/>
</dbReference>
<dbReference type="EvolutionaryTrace" id="P63244"/>
<dbReference type="GeneWiki" id="GNB2L1"/>
<dbReference type="GenomeRNAi" id="10399"/>
<dbReference type="Pharos" id="P63244">
    <property type="development level" value="Tbio"/>
</dbReference>
<dbReference type="PRO" id="PR:P63244"/>
<dbReference type="Proteomes" id="UP000005640">
    <property type="component" value="Chromosome 5"/>
</dbReference>
<dbReference type="RNAct" id="P63244">
    <property type="molecule type" value="protein"/>
</dbReference>
<dbReference type="Bgee" id="ENSG00000204628">
    <property type="expression patterns" value="Expressed in pericardium and 216 other cell types or tissues"/>
</dbReference>
<dbReference type="ExpressionAtlas" id="P63244">
    <property type="expression patterns" value="baseline and differential"/>
</dbReference>
<dbReference type="GO" id="GO:0005737">
    <property type="term" value="C:cytoplasm"/>
    <property type="evidence" value="ECO:0000314"/>
    <property type="project" value="UniProtKB"/>
</dbReference>
<dbReference type="GO" id="GO:0005829">
    <property type="term" value="C:cytosol"/>
    <property type="evidence" value="ECO:0000314"/>
    <property type="project" value="HPA"/>
</dbReference>
<dbReference type="GO" id="GO:0022627">
    <property type="term" value="C:cytosolic small ribosomal subunit"/>
    <property type="evidence" value="ECO:0000303"/>
    <property type="project" value="ComplexPortal"/>
</dbReference>
<dbReference type="GO" id="GO:0030425">
    <property type="term" value="C:dendrite"/>
    <property type="evidence" value="ECO:0000250"/>
    <property type="project" value="UniProtKB"/>
</dbReference>
<dbReference type="GO" id="GO:0070062">
    <property type="term" value="C:extracellular exosome"/>
    <property type="evidence" value="ECO:0007005"/>
    <property type="project" value="UniProtKB"/>
</dbReference>
<dbReference type="GO" id="GO:1990630">
    <property type="term" value="C:IRE1-RACK1-PP2A complex"/>
    <property type="evidence" value="ECO:0000314"/>
    <property type="project" value="ParkinsonsUK-UCL"/>
</dbReference>
<dbReference type="GO" id="GO:0030496">
    <property type="term" value="C:midbody"/>
    <property type="evidence" value="ECO:0000314"/>
    <property type="project" value="UniProtKB"/>
</dbReference>
<dbReference type="GO" id="GO:0005739">
    <property type="term" value="C:mitochondrion"/>
    <property type="evidence" value="ECO:0000315"/>
    <property type="project" value="UniProtKB"/>
</dbReference>
<dbReference type="GO" id="GO:0043025">
    <property type="term" value="C:neuronal cell body"/>
    <property type="evidence" value="ECO:0000250"/>
    <property type="project" value="UniProtKB"/>
</dbReference>
<dbReference type="GO" id="GO:0005654">
    <property type="term" value="C:nucleoplasm"/>
    <property type="evidence" value="ECO:0000314"/>
    <property type="project" value="HPA"/>
</dbReference>
<dbReference type="GO" id="GO:0005634">
    <property type="term" value="C:nucleus"/>
    <property type="evidence" value="ECO:0000314"/>
    <property type="project" value="UniProtKB"/>
</dbReference>
<dbReference type="GO" id="GO:0043204">
    <property type="term" value="C:perikaryon"/>
    <property type="evidence" value="ECO:0007669"/>
    <property type="project" value="UniProtKB-SubCell"/>
</dbReference>
<dbReference type="GO" id="GO:0048471">
    <property type="term" value="C:perinuclear region of cytoplasm"/>
    <property type="evidence" value="ECO:0000314"/>
    <property type="project" value="UniProtKB"/>
</dbReference>
<dbReference type="GO" id="GO:0001891">
    <property type="term" value="C:phagocytic cup"/>
    <property type="evidence" value="ECO:0000314"/>
    <property type="project" value="UniProtKB"/>
</dbReference>
<dbReference type="GO" id="GO:0015935">
    <property type="term" value="C:small ribosomal subunit"/>
    <property type="evidence" value="ECO:0000250"/>
    <property type="project" value="UniProtKB"/>
</dbReference>
<dbReference type="GO" id="GO:0051434">
    <property type="term" value="F:BH3 domain binding"/>
    <property type="evidence" value="ECO:0000314"/>
    <property type="project" value="UniProtKB"/>
</dbReference>
<dbReference type="GO" id="GO:0045296">
    <property type="term" value="F:cadherin binding"/>
    <property type="evidence" value="ECO:0007005"/>
    <property type="project" value="BHF-UCL"/>
</dbReference>
<dbReference type="GO" id="GO:0030332">
    <property type="term" value="F:cyclin binding"/>
    <property type="evidence" value="ECO:0000353"/>
    <property type="project" value="UniProtKB"/>
</dbReference>
<dbReference type="GO" id="GO:0008656">
    <property type="term" value="F:cysteine-type endopeptidase activator activity involved in apoptotic process"/>
    <property type="evidence" value="ECO:0000315"/>
    <property type="project" value="UniProtKB"/>
</dbReference>
<dbReference type="GO" id="GO:0008047">
    <property type="term" value="F:enzyme activator activity"/>
    <property type="evidence" value="ECO:0000314"/>
    <property type="project" value="BHF-UCL"/>
</dbReference>
<dbReference type="GO" id="GO:0019899">
    <property type="term" value="F:enzyme binding"/>
    <property type="evidence" value="ECO:0000353"/>
    <property type="project" value="BHF-UCL"/>
</dbReference>
<dbReference type="GO" id="GO:0042802">
    <property type="term" value="F:identical protein binding"/>
    <property type="evidence" value="ECO:0000353"/>
    <property type="project" value="IntAct"/>
</dbReference>
<dbReference type="GO" id="GO:0008200">
    <property type="term" value="F:ion channel inhibitor activity"/>
    <property type="evidence" value="ECO:0000250"/>
    <property type="project" value="UniProtKB"/>
</dbReference>
<dbReference type="GO" id="GO:0060090">
    <property type="term" value="F:molecular adaptor activity"/>
    <property type="evidence" value="ECO:0000304"/>
    <property type="project" value="BHF-UCL"/>
</dbReference>
<dbReference type="GO" id="GO:0042803">
    <property type="term" value="F:protein homodimerization activity"/>
    <property type="evidence" value="ECO:0000353"/>
    <property type="project" value="ParkinsonsUK-UCL"/>
</dbReference>
<dbReference type="GO" id="GO:0005080">
    <property type="term" value="F:protein kinase C binding"/>
    <property type="evidence" value="ECO:0000314"/>
    <property type="project" value="UniProtKB"/>
</dbReference>
<dbReference type="GO" id="GO:0019903">
    <property type="term" value="F:protein phosphatase binding"/>
    <property type="evidence" value="ECO:0000353"/>
    <property type="project" value="UniProtKB"/>
</dbReference>
<dbReference type="GO" id="GO:0030291">
    <property type="term" value="F:protein serine/threonine kinase inhibitor activity"/>
    <property type="evidence" value="ECO:0000315"/>
    <property type="project" value="ParkinsonsUK-UCL"/>
</dbReference>
<dbReference type="GO" id="GO:0030292">
    <property type="term" value="F:protein tyrosine kinase inhibitor activity"/>
    <property type="evidence" value="ECO:0000314"/>
    <property type="project" value="UniProtKB"/>
</dbReference>
<dbReference type="GO" id="GO:0030971">
    <property type="term" value="F:receptor tyrosine kinase binding"/>
    <property type="evidence" value="ECO:0000314"/>
    <property type="project" value="UniProtKB"/>
</dbReference>
<dbReference type="GO" id="GO:0043022">
    <property type="term" value="F:ribosome binding"/>
    <property type="evidence" value="ECO:0000314"/>
    <property type="project" value="UniProtKB"/>
</dbReference>
<dbReference type="GO" id="GO:0003723">
    <property type="term" value="F:RNA binding"/>
    <property type="evidence" value="ECO:0007005"/>
    <property type="project" value="UniProtKB"/>
</dbReference>
<dbReference type="GO" id="GO:0042169">
    <property type="term" value="F:SH2 domain binding"/>
    <property type="evidence" value="ECO:0000314"/>
    <property type="project" value="UniProtKB"/>
</dbReference>
<dbReference type="GO" id="GO:0035591">
    <property type="term" value="F:signaling adaptor activity"/>
    <property type="evidence" value="ECO:0000315"/>
    <property type="project" value="ParkinsonsUK-UCL"/>
</dbReference>
<dbReference type="GO" id="GO:0005102">
    <property type="term" value="F:signaling receptor binding"/>
    <property type="evidence" value="ECO:0000303"/>
    <property type="project" value="UniProtKB"/>
</dbReference>
<dbReference type="GO" id="GO:0045182">
    <property type="term" value="F:translation regulator activity"/>
    <property type="evidence" value="ECO:0007669"/>
    <property type="project" value="InterPro"/>
</dbReference>
<dbReference type="GO" id="GO:0071333">
    <property type="term" value="P:cellular response to glucose stimulus"/>
    <property type="evidence" value="ECO:0000314"/>
    <property type="project" value="ParkinsonsUK-UCL"/>
</dbReference>
<dbReference type="GO" id="GO:0071363">
    <property type="term" value="P:cellular response to growth factor stimulus"/>
    <property type="evidence" value="ECO:0000314"/>
    <property type="project" value="UniProtKB"/>
</dbReference>
<dbReference type="GO" id="GO:0002181">
    <property type="term" value="P:cytoplasmic translation"/>
    <property type="evidence" value="ECO:0000303"/>
    <property type="project" value="ComplexPortal"/>
</dbReference>
<dbReference type="GO" id="GO:0007369">
    <property type="term" value="P:gastrulation"/>
    <property type="evidence" value="ECO:0007669"/>
    <property type="project" value="UniProtKB-KW"/>
</dbReference>
<dbReference type="GO" id="GO:0030308">
    <property type="term" value="P:negative regulation of cell growth"/>
    <property type="evidence" value="ECO:0000314"/>
    <property type="project" value="UniProtKB"/>
</dbReference>
<dbReference type="GO" id="GO:1900102">
    <property type="term" value="P:negative regulation of endoplasmic reticulum unfolded protein response"/>
    <property type="evidence" value="ECO:0000304"/>
    <property type="project" value="ParkinsonsUK-UCL"/>
</dbReference>
<dbReference type="GO" id="GO:0010629">
    <property type="term" value="P:negative regulation of gene expression"/>
    <property type="evidence" value="ECO:0000315"/>
    <property type="project" value="UniProtKB"/>
</dbReference>
<dbReference type="GO" id="GO:1903751">
    <property type="term" value="P:negative regulation of intrinsic apoptotic signaling pathway in response to hydrogen peroxide"/>
    <property type="evidence" value="ECO:0000316"/>
    <property type="project" value="ParkinsonsUK-UCL"/>
</dbReference>
<dbReference type="GO" id="GO:0050765">
    <property type="term" value="P:negative regulation of phagocytosis"/>
    <property type="evidence" value="ECO:0000315"/>
    <property type="project" value="UniProtKB"/>
</dbReference>
<dbReference type="GO" id="GO:0051898">
    <property type="term" value="P:negative regulation of phosphatidylinositol 3-kinase/protein kinase B signal transduction"/>
    <property type="evidence" value="ECO:0000315"/>
    <property type="project" value="UniProtKB"/>
</dbReference>
<dbReference type="GO" id="GO:0032091">
    <property type="term" value="P:negative regulation of protein binding"/>
    <property type="evidence" value="ECO:0000314"/>
    <property type="project" value="UniProtKB"/>
</dbReference>
<dbReference type="GO" id="GO:0045879">
    <property type="term" value="P:negative regulation of smoothened signaling pathway"/>
    <property type="evidence" value="ECO:0000314"/>
    <property type="project" value="FlyBase"/>
</dbReference>
<dbReference type="GO" id="GO:0017148">
    <property type="term" value="P:negative regulation of translation"/>
    <property type="evidence" value="ECO:0000250"/>
    <property type="project" value="UniProtKB"/>
</dbReference>
<dbReference type="GO" id="GO:2001125">
    <property type="term" value="P:negative regulation of translational frameshifting"/>
    <property type="evidence" value="ECO:0000318"/>
    <property type="project" value="GO_Central"/>
</dbReference>
<dbReference type="GO" id="GO:0030178">
    <property type="term" value="P:negative regulation of Wnt signaling pathway"/>
    <property type="evidence" value="ECO:0000250"/>
    <property type="project" value="UniProtKB"/>
</dbReference>
<dbReference type="GO" id="GO:0043473">
    <property type="term" value="P:pigmentation"/>
    <property type="evidence" value="ECO:0007669"/>
    <property type="project" value="Ensembl"/>
</dbReference>
<dbReference type="GO" id="GO:0043065">
    <property type="term" value="P:positive regulation of apoptotic process"/>
    <property type="evidence" value="ECO:0000314"/>
    <property type="project" value="UniProtKB"/>
</dbReference>
<dbReference type="GO" id="GO:0030335">
    <property type="term" value="P:positive regulation of cell migration"/>
    <property type="evidence" value="ECO:0000314"/>
    <property type="project" value="UniProtKB"/>
</dbReference>
<dbReference type="GO" id="GO:2000543">
    <property type="term" value="P:positive regulation of gastrulation"/>
    <property type="evidence" value="ECO:0000250"/>
    <property type="project" value="UniProtKB"/>
</dbReference>
<dbReference type="GO" id="GO:0042998">
    <property type="term" value="P:positive regulation of Golgi to plasma membrane protein transport"/>
    <property type="evidence" value="ECO:0000315"/>
    <property type="project" value="UniProtKB"/>
</dbReference>
<dbReference type="GO" id="GO:0043547">
    <property type="term" value="P:positive regulation of GTPase activity"/>
    <property type="evidence" value="ECO:0000314"/>
    <property type="project" value="UniProtKB"/>
</dbReference>
<dbReference type="GO" id="GO:2001244">
    <property type="term" value="P:positive regulation of intrinsic apoptotic signaling pathway"/>
    <property type="evidence" value="ECO:0000315"/>
    <property type="project" value="UniProtKB"/>
</dbReference>
<dbReference type="GO" id="GO:0051901">
    <property type="term" value="P:positive regulation of mitochondrial depolarization"/>
    <property type="evidence" value="ECO:0000315"/>
    <property type="project" value="UniProtKB"/>
</dbReference>
<dbReference type="GO" id="GO:0032436">
    <property type="term" value="P:positive regulation of proteasomal ubiquitin-dependent protein catabolic process"/>
    <property type="evidence" value="ECO:0000314"/>
    <property type="project" value="UniProtKB"/>
</dbReference>
<dbReference type="GO" id="GO:0001934">
    <property type="term" value="P:positive regulation of protein phosphorylation"/>
    <property type="evidence" value="ECO:0000314"/>
    <property type="project" value="UniProtKB"/>
</dbReference>
<dbReference type="GO" id="GO:0031334">
    <property type="term" value="P:positive regulation of protein-containing complex assembly"/>
    <property type="evidence" value="ECO:0000314"/>
    <property type="project" value="UniProtKB"/>
</dbReference>
<dbReference type="GO" id="GO:0016567">
    <property type="term" value="P:protein ubiquitination"/>
    <property type="evidence" value="ECO:0000315"/>
    <property type="project" value="UniProtKB"/>
</dbReference>
<dbReference type="GO" id="GO:0106070">
    <property type="term" value="P:regulation of adenylate cyclase-activating G protein-coupled receptor signaling pathway"/>
    <property type="evidence" value="ECO:0000315"/>
    <property type="project" value="BHF-UCL"/>
</dbReference>
<dbReference type="GO" id="GO:0051726">
    <property type="term" value="P:regulation of cell cycle"/>
    <property type="evidence" value="ECO:0000314"/>
    <property type="project" value="UniProtKB"/>
</dbReference>
<dbReference type="GO" id="GO:0051302">
    <property type="term" value="P:regulation of cell division"/>
    <property type="evidence" value="ECO:0000250"/>
    <property type="project" value="UniProtKB"/>
</dbReference>
<dbReference type="GO" id="GO:2000114">
    <property type="term" value="P:regulation of establishment of cell polarity"/>
    <property type="evidence" value="ECO:0000250"/>
    <property type="project" value="UniProtKB"/>
</dbReference>
<dbReference type="GO" id="GO:0032880">
    <property type="term" value="P:regulation of protein localization"/>
    <property type="evidence" value="ECO:0000250"/>
    <property type="project" value="UniProtKB"/>
</dbReference>
<dbReference type="GO" id="GO:0072344">
    <property type="term" value="P:rescue of stalled ribosome"/>
    <property type="evidence" value="ECO:0000315"/>
    <property type="project" value="UniProtKB"/>
</dbReference>
<dbReference type="GO" id="GO:0048511">
    <property type="term" value="P:rhythmic process"/>
    <property type="evidence" value="ECO:0007669"/>
    <property type="project" value="UniProtKB-KW"/>
</dbReference>
<dbReference type="CDD" id="cd00200">
    <property type="entry name" value="WD40"/>
    <property type="match status" value="1"/>
</dbReference>
<dbReference type="FunFam" id="2.130.10.10:FF:001252">
    <property type="entry name" value="Receptor of activated protein C kinase 1"/>
    <property type="match status" value="1"/>
</dbReference>
<dbReference type="Gene3D" id="2.130.10.10">
    <property type="entry name" value="YVTN repeat-like/Quinoprotein amine dehydrogenase"/>
    <property type="match status" value="1"/>
</dbReference>
<dbReference type="InterPro" id="IPR020472">
    <property type="entry name" value="G-protein_beta_WD-40_rep"/>
</dbReference>
<dbReference type="InterPro" id="IPR045223">
    <property type="entry name" value="RACK1-like"/>
</dbReference>
<dbReference type="InterPro" id="IPR015943">
    <property type="entry name" value="WD40/YVTN_repeat-like_dom_sf"/>
</dbReference>
<dbReference type="InterPro" id="IPR019775">
    <property type="entry name" value="WD40_repeat_CS"/>
</dbReference>
<dbReference type="InterPro" id="IPR036322">
    <property type="entry name" value="WD40_repeat_dom_sf"/>
</dbReference>
<dbReference type="InterPro" id="IPR001680">
    <property type="entry name" value="WD40_rpt"/>
</dbReference>
<dbReference type="PANTHER" id="PTHR19868">
    <property type="entry name" value="RECEPTOR FOR ACTIVATED PROTEIN KINASE C RACK1"/>
    <property type="match status" value="1"/>
</dbReference>
<dbReference type="Pfam" id="PF00400">
    <property type="entry name" value="WD40"/>
    <property type="match status" value="7"/>
</dbReference>
<dbReference type="PRINTS" id="PR00320">
    <property type="entry name" value="GPROTEINBRPT"/>
</dbReference>
<dbReference type="SMART" id="SM00320">
    <property type="entry name" value="WD40"/>
    <property type="match status" value="7"/>
</dbReference>
<dbReference type="SUPFAM" id="SSF50978">
    <property type="entry name" value="WD40 repeat-like"/>
    <property type="match status" value="1"/>
</dbReference>
<dbReference type="PROSITE" id="PS00678">
    <property type="entry name" value="WD_REPEATS_1"/>
    <property type="match status" value="4"/>
</dbReference>
<dbReference type="PROSITE" id="PS50082">
    <property type="entry name" value="WD_REPEATS_2"/>
    <property type="match status" value="6"/>
</dbReference>
<dbReference type="PROSITE" id="PS50294">
    <property type="entry name" value="WD_REPEATS_REGION"/>
    <property type="match status" value="1"/>
</dbReference>
<feature type="chain" id="PRO_0000424480" description="Small ribosomal subunit protein RACK1">
    <location>
        <begin position="1"/>
        <end position="317"/>
    </location>
</feature>
<feature type="initiator methionine" description="Removed; alternate" evidence="44 49 51 52 53">
    <location>
        <position position="1"/>
    </location>
</feature>
<feature type="chain" id="PRO_0000127731" description="Small ribosomal subunit protein RACK1, N-terminally processed">
    <location>
        <begin position="2"/>
        <end position="317"/>
    </location>
</feature>
<feature type="repeat" description="WD 1">
    <location>
        <begin position="13"/>
        <end position="44"/>
    </location>
</feature>
<feature type="repeat" description="WD 2">
    <location>
        <begin position="61"/>
        <end position="91"/>
    </location>
</feature>
<feature type="repeat" description="WD 3">
    <location>
        <begin position="103"/>
        <end position="133"/>
    </location>
</feature>
<feature type="repeat" description="WD 4">
    <location>
        <begin position="146"/>
        <end position="178"/>
    </location>
</feature>
<feature type="repeat" description="WD 5">
    <location>
        <begin position="190"/>
        <end position="220"/>
    </location>
</feature>
<feature type="repeat" description="WD 6">
    <location>
        <begin position="231"/>
        <end position="260"/>
    </location>
</feature>
<feature type="repeat" description="WD 7">
    <location>
        <begin position="281"/>
        <end position="311"/>
    </location>
</feature>
<feature type="modified residue" description="N-acetylmethionine" evidence="53">
    <location>
        <position position="1"/>
    </location>
</feature>
<feature type="modified residue" description="N-acetylthreonine; in Guanine nucleotide-binding protein subunit beta-2-like 1, N-terminally processed" evidence="44 49 51 52 53">
    <location>
        <position position="2"/>
    </location>
</feature>
<feature type="modified residue" description="Phosphothreonine" evidence="54">
    <location>
        <position position="6"/>
    </location>
</feature>
<feature type="modified residue" description="Phosphothreonine" evidence="54">
    <location>
        <position position="10"/>
    </location>
</feature>
<feature type="modified residue" description="Phosphotyrosine; by ABL1" evidence="47">
    <location>
        <position position="52"/>
    </location>
</feature>
<feature type="modified residue" description="Phosphothreonine" evidence="54">
    <location>
        <position position="96"/>
    </location>
</feature>
<feature type="modified residue" description="N6-acetyllysine" evidence="50">
    <location>
        <position position="130"/>
    </location>
</feature>
<feature type="modified residue" description="N6-acetyllysine" evidence="2">
    <location>
        <position position="183"/>
    </location>
</feature>
<feature type="modified residue" description="Phosphotyrosine" evidence="4">
    <location>
        <position position="228"/>
    </location>
</feature>
<feature type="modified residue" description="Phosphoserine; by viral VacV B1 kinase" evidence="40 54">
    <location>
        <position position="276"/>
    </location>
</feature>
<feature type="modified residue" description="Phosphothreonine; by viral VacV B1 kinase" evidence="40">
    <location>
        <position position="277"/>
    </location>
</feature>
<feature type="modified residue" description="Phosphoserine; by viral VacV B1 kinase" evidence="40">
    <location>
        <position position="278"/>
    </location>
</feature>
<feature type="modified residue" description="Phosphoserine; by viral VacV B1 kinase" evidence="40">
    <location>
        <position position="279"/>
    </location>
</feature>
<feature type="modified residue" description="Phosphothreonine" evidence="2">
    <location>
        <position position="316"/>
    </location>
</feature>
<feature type="mutagenesis site" description="In DEmut; abolishes association with the ribosome and ability to initiate the ribosome quality control (RQC)." evidence="39">
    <original>RDK</original>
    <variation>DDE</variation>
    <location>
        <begin position="36"/>
        <end position="38"/>
    </location>
</feature>
<feature type="mutagenesis site" description="No effect on binding to SRC. Abolishes binding to PTK2/FAK1 and reduces cell adhesion and foci formation." evidence="4 8 23">
    <original>Y</original>
    <variation>F</variation>
    <location>
        <position position="52"/>
    </location>
</feature>
<feature type="mutagenesis site" description="Decreased binding to PTK2/FAK1; when associated with A-60." evidence="23">
    <original>R</original>
    <variation>A</variation>
    <location>
        <position position="57"/>
    </location>
</feature>
<feature type="mutagenesis site" description="Decreased binding to PTK2/FAK1; when associated with A-57." evidence="23">
    <original>R</original>
    <variation>A</variation>
    <location>
        <position position="60"/>
    </location>
</feature>
<feature type="mutagenesis site" description="Decreased binding to PTK2/FAK1; when associated with A-130." evidence="23">
    <original>K</original>
    <variation>A</variation>
    <location>
        <position position="127"/>
    </location>
</feature>
<feature type="mutagenesis site" description="Decreased binding to PTK2/FAK1; when associated with A-127." evidence="23">
    <original>K</original>
    <variation>A</variation>
    <location>
        <position position="130"/>
    </location>
</feature>
<feature type="mutagenesis site" description="No effect on binding to SRC." evidence="4 8">
    <original>Y</original>
    <variation>F</variation>
    <location>
        <position position="140"/>
    </location>
</feature>
<feature type="mutagenesis site" description="No effect on binding to SRC." evidence="4 8">
    <original>Y</original>
    <variation>F</variation>
    <location>
        <position position="194"/>
    </location>
</feature>
<feature type="mutagenesis site" description="No effect on binding to SRC. Does not abolish phosphorylation by SRC. Abolishes phosphorylation by SRC; when associated with F-246 and F-302." evidence="4 8">
    <original>Y</original>
    <variation>F</variation>
    <location>
        <position position="228"/>
    </location>
</feature>
<feature type="mutagenesis site" description="Abolishes binding to SRC. Does not abolish phosphorylation by SRC. Abolishes phosphorylation by SRC; when associated with F-228 and F-302." evidence="4 8">
    <original>Y</original>
    <variation>F</variation>
    <location>
        <position position="246"/>
    </location>
</feature>
<feature type="mutagenesis site" description="Enhanced translation of mRNAs containing poly-A leaders." evidence="40">
    <original>STSS</original>
    <variation>EEEE</variation>
    <location>
        <begin position="276"/>
        <end position="279"/>
    </location>
</feature>
<feature type="mutagenesis site" description="Enhanced translation of mRNAs containing poly-A leaders." evidence="40">
    <original>S</original>
    <variation>E</variation>
    <location>
        <position position="278"/>
    </location>
</feature>
<feature type="mutagenesis site" description="No effect on binding to SRC. Abolishes phosphorylation by SRC; when associated with F-228 and F-246." evidence="4 8">
    <original>Y</original>
    <variation>F</variation>
    <location>
        <position position="302"/>
    </location>
</feature>
<feature type="sequence conflict" description="In Ref. 4; BAG53102." evidence="46" ref="4">
    <location>
        <begin position="70"/>
        <end position="111"/>
    </location>
</feature>
<feature type="sequence conflict" description="In Ref. 3; AAR24619." evidence="46" ref="3">
    <original>T</original>
    <variation>TRK</variation>
    <location>
        <position position="94"/>
    </location>
</feature>
<feature type="sequence conflict" description="In Ref. 6; BAD96208." evidence="46" ref="6">
    <original>L</original>
    <variation>F</variation>
    <location>
        <position position="221"/>
    </location>
</feature>
<feature type="strand" evidence="61">
    <location>
        <begin position="4"/>
        <end position="11"/>
    </location>
</feature>
<feature type="strand" evidence="61">
    <location>
        <begin position="18"/>
        <end position="23"/>
    </location>
</feature>
<feature type="strand" evidence="57">
    <location>
        <begin position="25"/>
        <end position="27"/>
    </location>
</feature>
<feature type="strand" evidence="61">
    <location>
        <begin position="30"/>
        <end position="35"/>
    </location>
</feature>
<feature type="strand" evidence="60">
    <location>
        <begin position="36"/>
        <end position="38"/>
    </location>
</feature>
<feature type="strand" evidence="61">
    <location>
        <begin position="40"/>
        <end position="45"/>
    </location>
</feature>
<feature type="strand" evidence="55">
    <location>
        <begin position="48"/>
        <end position="50"/>
    </location>
</feature>
<feature type="strand" evidence="61">
    <location>
        <begin position="52"/>
        <end position="59"/>
    </location>
</feature>
<feature type="strand" evidence="61">
    <location>
        <begin position="66"/>
        <end position="71"/>
    </location>
</feature>
<feature type="strand" evidence="61">
    <location>
        <begin position="75"/>
        <end position="82"/>
    </location>
</feature>
<feature type="strand" evidence="57">
    <location>
        <begin position="83"/>
        <end position="85"/>
    </location>
</feature>
<feature type="strand" evidence="61">
    <location>
        <begin position="87"/>
        <end position="91"/>
    </location>
</feature>
<feature type="turn" evidence="61">
    <location>
        <begin position="92"/>
        <end position="95"/>
    </location>
</feature>
<feature type="strand" evidence="61">
    <location>
        <begin position="96"/>
        <end position="101"/>
    </location>
</feature>
<feature type="strand" evidence="61">
    <location>
        <begin position="108"/>
        <end position="113"/>
    </location>
</feature>
<feature type="strand" evidence="59">
    <location>
        <begin position="115"/>
        <end position="118"/>
    </location>
</feature>
<feature type="strand" evidence="61">
    <location>
        <begin position="120"/>
        <end position="124"/>
    </location>
</feature>
<feature type="strand" evidence="61">
    <location>
        <begin position="129"/>
        <end position="132"/>
    </location>
</feature>
<feature type="strand" evidence="56">
    <location>
        <begin position="134"/>
        <end position="136"/>
    </location>
</feature>
<feature type="strand" evidence="61">
    <location>
        <begin position="138"/>
        <end position="142"/>
    </location>
</feature>
<feature type="strand" evidence="55">
    <location>
        <begin position="144"/>
        <end position="146"/>
    </location>
</feature>
<feature type="strand" evidence="61">
    <location>
        <begin position="151"/>
        <end position="156"/>
    </location>
</feature>
<feature type="strand" evidence="61">
    <location>
        <begin position="160"/>
        <end position="162"/>
    </location>
</feature>
<feature type="strand" evidence="61">
    <location>
        <begin position="164"/>
        <end position="169"/>
    </location>
</feature>
<feature type="strand" evidence="58">
    <location>
        <begin position="170"/>
        <end position="172"/>
    </location>
</feature>
<feature type="strand" evidence="61">
    <location>
        <begin position="174"/>
        <end position="178"/>
    </location>
</feature>
<feature type="turn" evidence="61">
    <location>
        <begin position="179"/>
        <end position="182"/>
    </location>
</feature>
<feature type="strand" evidence="61">
    <location>
        <begin position="184"/>
        <end position="188"/>
    </location>
</feature>
<feature type="strand" evidence="61">
    <location>
        <begin position="195"/>
        <end position="200"/>
    </location>
</feature>
<feature type="strand" evidence="62">
    <location>
        <begin position="202"/>
        <end position="204"/>
    </location>
</feature>
<feature type="strand" evidence="61">
    <location>
        <begin position="207"/>
        <end position="211"/>
    </location>
</feature>
<feature type="strand" evidence="61">
    <location>
        <begin position="215"/>
        <end position="220"/>
    </location>
</feature>
<feature type="turn" evidence="61">
    <location>
        <begin position="221"/>
        <end position="224"/>
    </location>
</feature>
<feature type="strand" evidence="61">
    <location>
        <begin position="225"/>
        <end position="231"/>
    </location>
</feature>
<feature type="strand" evidence="61">
    <location>
        <begin position="236"/>
        <end position="241"/>
    </location>
</feature>
<feature type="strand" evidence="61">
    <location>
        <begin position="243"/>
        <end position="252"/>
    </location>
</feature>
<feature type="strand" evidence="61">
    <location>
        <begin position="255"/>
        <end position="260"/>
    </location>
</feature>
<feature type="turn" evidence="61">
    <location>
        <begin position="261"/>
        <end position="264"/>
    </location>
</feature>
<feature type="strand" evidence="61">
    <location>
        <begin position="265"/>
        <end position="270"/>
    </location>
</feature>
<feature type="strand" evidence="61">
    <location>
        <begin position="278"/>
        <end position="280"/>
    </location>
</feature>
<feature type="strand" evidence="61">
    <location>
        <begin position="286"/>
        <end position="291"/>
    </location>
</feature>
<feature type="strand" evidence="61">
    <location>
        <begin position="293"/>
        <end position="305"/>
    </location>
</feature>
<feature type="strand" evidence="61">
    <location>
        <begin position="307"/>
        <end position="313"/>
    </location>
</feature>
<evidence type="ECO:0000250" key="1"/>
<evidence type="ECO:0000250" key="2">
    <source>
        <dbReference type="UniProtKB" id="P68040"/>
    </source>
</evidence>
<evidence type="ECO:0000269" key="3">
    <source>
    </source>
</evidence>
<evidence type="ECO:0000269" key="4">
    <source>
    </source>
</evidence>
<evidence type="ECO:0000269" key="5">
    <source>
    </source>
</evidence>
<evidence type="ECO:0000269" key="6">
    <source>
    </source>
</evidence>
<evidence type="ECO:0000269" key="7">
    <source>
    </source>
</evidence>
<evidence type="ECO:0000269" key="8">
    <source>
    </source>
</evidence>
<evidence type="ECO:0000269" key="9">
    <source>
    </source>
</evidence>
<evidence type="ECO:0000269" key="10">
    <source>
    </source>
</evidence>
<evidence type="ECO:0000269" key="11">
    <source>
    </source>
</evidence>
<evidence type="ECO:0000269" key="12">
    <source>
    </source>
</evidence>
<evidence type="ECO:0000269" key="13">
    <source>
    </source>
</evidence>
<evidence type="ECO:0000269" key="14">
    <source>
    </source>
</evidence>
<evidence type="ECO:0000269" key="15">
    <source>
    </source>
</evidence>
<evidence type="ECO:0000269" key="16">
    <source>
    </source>
</evidence>
<evidence type="ECO:0000269" key="17">
    <source>
    </source>
</evidence>
<evidence type="ECO:0000269" key="18">
    <source>
    </source>
</evidence>
<evidence type="ECO:0000269" key="19">
    <source>
    </source>
</evidence>
<evidence type="ECO:0000269" key="20">
    <source>
    </source>
</evidence>
<evidence type="ECO:0000269" key="21">
    <source>
    </source>
</evidence>
<evidence type="ECO:0000269" key="22">
    <source>
    </source>
</evidence>
<evidence type="ECO:0000269" key="23">
    <source>
    </source>
</evidence>
<evidence type="ECO:0000269" key="24">
    <source>
    </source>
</evidence>
<evidence type="ECO:0000269" key="25">
    <source>
    </source>
</evidence>
<evidence type="ECO:0000269" key="26">
    <source>
    </source>
</evidence>
<evidence type="ECO:0000269" key="27">
    <source>
    </source>
</evidence>
<evidence type="ECO:0000269" key="28">
    <source>
    </source>
</evidence>
<evidence type="ECO:0000269" key="29">
    <source>
    </source>
</evidence>
<evidence type="ECO:0000269" key="30">
    <source>
    </source>
</evidence>
<evidence type="ECO:0000269" key="31">
    <source>
    </source>
</evidence>
<evidence type="ECO:0000269" key="32">
    <source>
    </source>
</evidence>
<evidence type="ECO:0000269" key="33">
    <source>
    </source>
</evidence>
<evidence type="ECO:0000269" key="34">
    <source>
    </source>
</evidence>
<evidence type="ECO:0000269" key="35">
    <source>
    </source>
</evidence>
<evidence type="ECO:0000269" key="36">
    <source>
    </source>
</evidence>
<evidence type="ECO:0000269" key="37">
    <source>
    </source>
</evidence>
<evidence type="ECO:0000269" key="38">
    <source>
    </source>
</evidence>
<evidence type="ECO:0000269" key="39">
    <source>
    </source>
</evidence>
<evidence type="ECO:0000269" key="40">
    <source>
    </source>
</evidence>
<evidence type="ECO:0000269" key="41">
    <source>
    </source>
</evidence>
<evidence type="ECO:0000269" key="42">
    <source>
    </source>
</evidence>
<evidence type="ECO:0000269" key="43">
    <source>
    </source>
</evidence>
<evidence type="ECO:0000269" key="44">
    <source ref="9"/>
</evidence>
<evidence type="ECO:0000303" key="45">
    <source>
    </source>
</evidence>
<evidence type="ECO:0000305" key="46"/>
<evidence type="ECO:0000305" key="47">
    <source>
    </source>
</evidence>
<evidence type="ECO:0000312" key="48">
    <source>
        <dbReference type="HGNC" id="HGNC:4399"/>
    </source>
</evidence>
<evidence type="ECO:0007744" key="49">
    <source>
    </source>
</evidence>
<evidence type="ECO:0007744" key="50">
    <source>
    </source>
</evidence>
<evidence type="ECO:0007744" key="51">
    <source>
    </source>
</evidence>
<evidence type="ECO:0007744" key="52">
    <source>
    </source>
</evidence>
<evidence type="ECO:0007744" key="53">
    <source>
    </source>
</evidence>
<evidence type="ECO:0007744" key="54">
    <source>
    </source>
</evidence>
<evidence type="ECO:0007829" key="55">
    <source>
        <dbReference type="PDB" id="4AOW"/>
    </source>
</evidence>
<evidence type="ECO:0007829" key="56">
    <source>
        <dbReference type="PDB" id="6ZLW"/>
    </source>
</evidence>
<evidence type="ECO:0007829" key="57">
    <source>
        <dbReference type="PDB" id="6ZV6"/>
    </source>
</evidence>
<evidence type="ECO:0007829" key="58">
    <source>
        <dbReference type="PDB" id="6ZXE"/>
    </source>
</evidence>
<evidence type="ECO:0007829" key="59">
    <source>
        <dbReference type="PDB" id="6ZXG"/>
    </source>
</evidence>
<evidence type="ECO:0007829" key="60">
    <source>
        <dbReference type="PDB" id="6ZXH"/>
    </source>
</evidence>
<evidence type="ECO:0007829" key="61">
    <source>
        <dbReference type="PDB" id="7R4X"/>
    </source>
</evidence>
<evidence type="ECO:0007829" key="62">
    <source>
        <dbReference type="PDB" id="7TQL"/>
    </source>
</evidence>
<organism>
    <name type="scientific">Homo sapiens</name>
    <name type="common">Human</name>
    <dbReference type="NCBI Taxonomy" id="9606"/>
    <lineage>
        <taxon>Eukaryota</taxon>
        <taxon>Metazoa</taxon>
        <taxon>Chordata</taxon>
        <taxon>Craniata</taxon>
        <taxon>Vertebrata</taxon>
        <taxon>Euteleostomi</taxon>
        <taxon>Mammalia</taxon>
        <taxon>Eutheria</taxon>
        <taxon>Euarchontoglires</taxon>
        <taxon>Primates</taxon>
        <taxon>Haplorrhini</taxon>
        <taxon>Catarrhini</taxon>
        <taxon>Hominidae</taxon>
        <taxon>Homo</taxon>
    </lineage>
</organism>
<sequence length="317" mass="35077">MTEQMTLRGTLKGHNGWVTQIATTPQFPDMILSASRDKTIIMWKLTRDETNYGIPQRALRGHSHFVSDVVISSDGQFALSGSWDGTLRLWDLTTGTTTRRFVGHTKDVLSVAFSSDNRQIVSGSRDKTIKLWNTLGVCKYTVQDESHSEWVSCVRFSPNSSNPIIVSCGWDKLVKVWNLANCKLKTNHIGHTGYLNTVTVSPDGSLCASGGKDGQAMLWDLNEGKHLYTLDGGDIINALCFSPNRYWLCAATGPSIKIWDLEGKIIVDELKQEVISTSSKAEPPQCTSLAWSADGQTLFAGYTDNLVRVWQVTIGTR</sequence>
<reference key="1">
    <citation type="journal article" date="1989" name="Proc. Natl. Acad. Sci. U.S.A.">
        <title>Physical linkage of a guanine nucleotide-binding protein-related gene to the chicken major histocompatibility complex.</title>
        <authorList>
            <person name="Guillemot F."/>
            <person name="Billault A."/>
            <person name="Auffray C."/>
        </authorList>
    </citation>
    <scope>NUCLEOTIDE SEQUENCE [MRNA]</scope>
</reference>
<reference key="2">
    <citation type="submission" date="2002-10" db="EMBL/GenBank/DDBJ databases">
        <title>Identification of new tumor-related gene in human lung cancer.</title>
        <authorList>
            <person name="Kim J.W."/>
        </authorList>
    </citation>
    <scope>NUCLEOTIDE SEQUENCE [LARGE SCALE MRNA]</scope>
</reference>
<reference key="3">
    <citation type="submission" date="2003-07" db="EMBL/GenBank/DDBJ databases">
        <title>Identification of a proliferation-inducing gene.</title>
        <authorList>
            <person name="Kim J.W."/>
        </authorList>
    </citation>
    <scope>NUCLEOTIDE SEQUENCE [LARGE SCALE MRNA]</scope>
</reference>
<reference key="4">
    <citation type="journal article" date="2004" name="Nat. Genet.">
        <title>Complete sequencing and characterization of 21,243 full-length human cDNAs.</title>
        <authorList>
            <person name="Ota T."/>
            <person name="Suzuki Y."/>
            <person name="Nishikawa T."/>
            <person name="Otsuki T."/>
            <person name="Sugiyama T."/>
            <person name="Irie R."/>
            <person name="Wakamatsu A."/>
            <person name="Hayashi K."/>
            <person name="Sato H."/>
            <person name="Nagai K."/>
            <person name="Kimura K."/>
            <person name="Makita H."/>
            <person name="Sekine M."/>
            <person name="Obayashi M."/>
            <person name="Nishi T."/>
            <person name="Shibahara T."/>
            <person name="Tanaka T."/>
            <person name="Ishii S."/>
            <person name="Yamamoto J."/>
            <person name="Saito K."/>
            <person name="Kawai Y."/>
            <person name="Isono Y."/>
            <person name="Nakamura Y."/>
            <person name="Nagahari K."/>
            <person name="Murakami K."/>
            <person name="Yasuda T."/>
            <person name="Iwayanagi T."/>
            <person name="Wagatsuma M."/>
            <person name="Shiratori A."/>
            <person name="Sudo H."/>
            <person name="Hosoiri T."/>
            <person name="Kaku Y."/>
            <person name="Kodaira H."/>
            <person name="Kondo H."/>
            <person name="Sugawara M."/>
            <person name="Takahashi M."/>
            <person name="Kanda K."/>
            <person name="Yokoi T."/>
            <person name="Furuya T."/>
            <person name="Kikkawa E."/>
            <person name="Omura Y."/>
            <person name="Abe K."/>
            <person name="Kamihara K."/>
            <person name="Katsuta N."/>
            <person name="Sato K."/>
            <person name="Tanikawa M."/>
            <person name="Yamazaki M."/>
            <person name="Ninomiya K."/>
            <person name="Ishibashi T."/>
            <person name="Yamashita H."/>
            <person name="Murakawa K."/>
            <person name="Fujimori K."/>
            <person name="Tanai H."/>
            <person name="Kimata M."/>
            <person name="Watanabe M."/>
            <person name="Hiraoka S."/>
            <person name="Chiba Y."/>
            <person name="Ishida S."/>
            <person name="Ono Y."/>
            <person name="Takiguchi S."/>
            <person name="Watanabe S."/>
            <person name="Yosida M."/>
            <person name="Hotuta T."/>
            <person name="Kusano J."/>
            <person name="Kanehori K."/>
            <person name="Takahashi-Fujii A."/>
            <person name="Hara H."/>
            <person name="Tanase T.-O."/>
            <person name="Nomura Y."/>
            <person name="Togiya S."/>
            <person name="Komai F."/>
            <person name="Hara R."/>
            <person name="Takeuchi K."/>
            <person name="Arita M."/>
            <person name="Imose N."/>
            <person name="Musashino K."/>
            <person name="Yuuki H."/>
            <person name="Oshima A."/>
            <person name="Sasaki N."/>
            <person name="Aotsuka S."/>
            <person name="Yoshikawa Y."/>
            <person name="Matsunawa H."/>
            <person name="Ichihara T."/>
            <person name="Shiohata N."/>
            <person name="Sano S."/>
            <person name="Moriya S."/>
            <person name="Momiyama H."/>
            <person name="Satoh N."/>
            <person name="Takami S."/>
            <person name="Terashima Y."/>
            <person name="Suzuki O."/>
            <person name="Nakagawa S."/>
            <person name="Senoh A."/>
            <person name="Mizoguchi H."/>
            <person name="Goto Y."/>
            <person name="Shimizu F."/>
            <person name="Wakebe H."/>
            <person name="Hishigaki H."/>
            <person name="Watanabe T."/>
            <person name="Sugiyama A."/>
            <person name="Takemoto M."/>
            <person name="Kawakami B."/>
            <person name="Yamazaki M."/>
            <person name="Watanabe K."/>
            <person name="Kumagai A."/>
            <person name="Itakura S."/>
            <person name="Fukuzumi Y."/>
            <person name="Fujimori Y."/>
            <person name="Komiyama M."/>
            <person name="Tashiro H."/>
            <person name="Tanigami A."/>
            <person name="Fujiwara T."/>
            <person name="Ono T."/>
            <person name="Yamada K."/>
            <person name="Fujii Y."/>
            <person name="Ozaki K."/>
            <person name="Hirao M."/>
            <person name="Ohmori Y."/>
            <person name="Kawabata A."/>
            <person name="Hikiji T."/>
            <person name="Kobatake N."/>
            <person name="Inagaki H."/>
            <person name="Ikema Y."/>
            <person name="Okamoto S."/>
            <person name="Okitani R."/>
            <person name="Kawakami T."/>
            <person name="Noguchi S."/>
            <person name="Itoh T."/>
            <person name="Shigeta K."/>
            <person name="Senba T."/>
            <person name="Matsumura K."/>
            <person name="Nakajima Y."/>
            <person name="Mizuno T."/>
            <person name="Morinaga M."/>
            <person name="Sasaki M."/>
            <person name="Togashi T."/>
            <person name="Oyama M."/>
            <person name="Hata H."/>
            <person name="Watanabe M."/>
            <person name="Komatsu T."/>
            <person name="Mizushima-Sugano J."/>
            <person name="Satoh T."/>
            <person name="Shirai Y."/>
            <person name="Takahashi Y."/>
            <person name="Nakagawa K."/>
            <person name="Okumura K."/>
            <person name="Nagase T."/>
            <person name="Nomura N."/>
            <person name="Kikuchi H."/>
            <person name="Masuho Y."/>
            <person name="Yamashita R."/>
            <person name="Nakai K."/>
            <person name="Yada T."/>
            <person name="Nakamura Y."/>
            <person name="Ohara O."/>
            <person name="Isogai T."/>
            <person name="Sugano S."/>
        </authorList>
    </citation>
    <scope>NUCLEOTIDE SEQUENCE [LARGE SCALE MRNA]</scope>
    <source>
        <tissue>Brain</tissue>
    </source>
</reference>
<reference key="5">
    <citation type="submission" date="2004-06" db="EMBL/GenBank/DDBJ databases">
        <title>Cloning of human full open reading frames in Gateway(TM) system entry vector (pDONR201).</title>
        <authorList>
            <person name="Ebert L."/>
            <person name="Schick M."/>
            <person name="Neubert P."/>
            <person name="Schatten R."/>
            <person name="Henze S."/>
            <person name="Korn B."/>
        </authorList>
    </citation>
    <scope>NUCLEOTIDE SEQUENCE [LARGE SCALE MRNA]</scope>
</reference>
<reference key="6">
    <citation type="submission" date="2005-04" db="EMBL/GenBank/DDBJ databases">
        <authorList>
            <person name="Suzuki Y."/>
            <person name="Sugano S."/>
            <person name="Totoki Y."/>
            <person name="Toyoda A."/>
            <person name="Takeda T."/>
            <person name="Sakaki Y."/>
            <person name="Tanaka A."/>
            <person name="Yokoyama S."/>
        </authorList>
    </citation>
    <scope>NUCLEOTIDE SEQUENCE [LARGE SCALE MRNA]</scope>
    <source>
        <tissue>Adipose tissue</tissue>
    </source>
</reference>
<reference key="7">
    <citation type="submission" date="2005-09" db="EMBL/GenBank/DDBJ databases">
        <authorList>
            <person name="Mural R.J."/>
            <person name="Istrail S."/>
            <person name="Sutton G.G."/>
            <person name="Florea L."/>
            <person name="Halpern A.L."/>
            <person name="Mobarry C.M."/>
            <person name="Lippert R."/>
            <person name="Walenz B."/>
            <person name="Shatkay H."/>
            <person name="Dew I."/>
            <person name="Miller J.R."/>
            <person name="Flanigan M.J."/>
            <person name="Edwards N.J."/>
            <person name="Bolanos R."/>
            <person name="Fasulo D."/>
            <person name="Halldorsson B.V."/>
            <person name="Hannenhalli S."/>
            <person name="Turner R."/>
            <person name="Yooseph S."/>
            <person name="Lu F."/>
            <person name="Nusskern D.R."/>
            <person name="Shue B.C."/>
            <person name="Zheng X.H."/>
            <person name="Zhong F."/>
            <person name="Delcher A.L."/>
            <person name="Huson D.H."/>
            <person name="Kravitz S.A."/>
            <person name="Mouchard L."/>
            <person name="Reinert K."/>
            <person name="Remington K.A."/>
            <person name="Clark A.G."/>
            <person name="Waterman M.S."/>
            <person name="Eichler E.E."/>
            <person name="Adams M.D."/>
            <person name="Hunkapiller M.W."/>
            <person name="Myers E.W."/>
            <person name="Venter J.C."/>
        </authorList>
    </citation>
    <scope>NUCLEOTIDE SEQUENCE [LARGE SCALE GENOMIC DNA]</scope>
</reference>
<reference key="8">
    <citation type="journal article" date="2004" name="Genome Res.">
        <title>The status, quality, and expansion of the NIH full-length cDNA project: the Mammalian Gene Collection (MGC).</title>
        <authorList>
            <consortium name="The MGC Project Team"/>
        </authorList>
    </citation>
    <scope>NUCLEOTIDE SEQUENCE [LARGE SCALE MRNA]</scope>
    <source>
        <tissue>B-cell</tissue>
        <tissue>Brain</tissue>
        <tissue>Cervix</tissue>
        <tissue>Lung</tissue>
        <tissue>Lymph</tissue>
        <tissue>Ovary</tissue>
        <tissue>Skin</tissue>
    </source>
</reference>
<reference key="9">
    <citation type="submission" date="2006-05" db="UniProtKB">
        <authorList>
            <person name="Bienvenut W.V."/>
            <person name="Kanor S."/>
            <person name="Tissot J.-D."/>
            <person name="Quadroni M."/>
        </authorList>
    </citation>
    <scope>PROTEIN SEQUENCE OF 2-11; 48-57; 107-118; 258-280 AND 309-317</scope>
    <scope>CLEAVAGE OF INITIATOR METHIONINE</scope>
    <scope>ACETYLATION AT THR-2</scope>
    <scope>IDENTIFICATION BY MASS SPECTROMETRY</scope>
    <source>
        <tissue>B-cell lymphoma</tissue>
        <tissue>T-cell</tissue>
    </source>
</reference>
<reference key="10">
    <citation type="submission" date="2007-03" db="UniProtKB">
        <authorList>
            <person name="Lubec G."/>
            <person name="Afjehi-Sadat L."/>
        </authorList>
    </citation>
    <scope>PROTEIN SEQUENCE OF 48-57; 107-118; 140-155 AND 226-245</scope>
    <scope>IDENTIFICATION BY MASS SPECTROMETRY</scope>
    <source>
        <tissue>Brain</tissue>
        <tissue>Cajal-Retzius cell</tissue>
    </source>
</reference>
<reference key="11">
    <citation type="journal article" date="1998" name="Mol. Cell. Biol.">
        <title>RACK1, a receptor for activated C kinase and a homolog of the beta subunit of G proteins, inhibits activity of src tyrosine kinases and growth of NIH 3T3 cells.</title>
        <authorList>
            <person name="Chang B.Y."/>
            <person name="Conroy K.B."/>
            <person name="Machleder E.M."/>
            <person name="Cartwright C.A."/>
        </authorList>
    </citation>
    <scope>FUNCTION</scope>
    <scope>INTERACTION WITH SRC</scope>
</reference>
<reference key="12">
    <citation type="journal article" date="2000" name="Eur. J. Biochem.">
        <title>The PKC targeting protein RACK1 interacts with the Epstein-Barr virus activator protein BZLF1.</title>
        <authorList>
            <person name="Baumann M."/>
            <person name="Gires O."/>
            <person name="Kolch W."/>
            <person name="Mischak H."/>
            <person name="Zeidler R."/>
            <person name="Pich D."/>
            <person name="Hammerschmidt W."/>
        </authorList>
    </citation>
    <scope>INTERACTION WITH EPSTEIN-BARR VIRUS BZLF1 (MICROBIAL INFECTION)</scope>
    <scope>SUBCELLULAR LOCATION</scope>
</reference>
<reference key="13">
    <citation type="journal article" date="2001" name="J. Biol. Chem.">
        <title>The interaction of Src and RACK1 is enhanced by activation of protein kinase C and tyrosine phosphorylation of RACK1.</title>
        <authorList>
            <person name="Chang B.Y."/>
            <person name="Chiang M."/>
            <person name="Cartwright C.A."/>
        </authorList>
    </citation>
    <scope>INTERACTION WITH SRC</scope>
    <scope>SUBCELLULAR LOCATION</scope>
    <scope>PHOSPHORYLATION AT TYR-228</scope>
    <scope>MUTAGENESIS OF TYR-52; TYR-140; TYR-194; TYR-228; TYR-246 AND TYR-302</scope>
</reference>
<reference key="14">
    <citation type="journal article" date="2001" name="Virology">
        <title>Rack1 binds HIV-1 Nef and can act as a Nef-protein kinase C adaptor.</title>
        <authorList>
            <person name="Gallina A."/>
            <person name="Rossi F."/>
            <person name="Milanesi G."/>
        </authorList>
    </citation>
    <scope>FUNCTION (MICROBIAL INFECTION)</scope>
    <scope>INTERACTION WITH HIV-1 NEF (MICROBIAL INFECTION)</scope>
    <scope>SUBCELLULAR LOCATION</scope>
</reference>
<reference key="15">
    <citation type="journal article" date="2002" name="J. Biol. Chem.">
        <title>Protein kinase C epsilon-dependent regulation of cystic fibrosis transmembrane regulator involves binding to a receptor for activated C kinase (RACK1) and RACK1 binding to Na+/H+ exchange regulatory factor.</title>
        <authorList>
            <person name="Liedtke C.M."/>
            <person name="Yun C.H.C."/>
            <person name="Kyle N."/>
            <person name="Wang D."/>
        </authorList>
    </citation>
    <scope>INTERACTION WITH NHERF1</scope>
</reference>
<reference key="16">
    <citation type="journal article" date="2002" name="Mol. Cell. Biol.">
        <title>RACK1, an insulin-like growth factor I (IGF-I) receptor-interacting protein, modulates IGF-I-dependent integrin signaling and promotes cell spreading and contact with extracellular matrix.</title>
        <authorList>
            <person name="Hermanto U."/>
            <person name="Zong C.S."/>
            <person name="Li W."/>
            <person name="Wang L.H."/>
        </authorList>
    </citation>
    <scope>FUNCTION</scope>
    <scope>SUBCELLULAR LOCATION</scope>
    <scope>INTERACTION WITH IGF1R</scope>
</reference>
<reference key="17">
    <citation type="journal article" date="2002" name="Oncogene">
        <title>RACK1: a novel substrate for the Src protein-tyrosine kinase.</title>
        <authorList>
            <person name="Chang B.Y."/>
            <person name="Harte R.A."/>
            <person name="Cartwright C.A."/>
        </authorList>
    </citation>
    <scope>PHOSPHORYLATION</scope>
    <scope>MUTAGENESIS OF TYR-52; TYR-140; TYR-194; TYR-228; TYR-246 AND TYR-302</scope>
</reference>
<reference key="18">
    <citation type="journal article" date="2003" name="Cancer Res.">
        <title>Alternative splicing of the human proto-oncogene c-H-ras renders a new Ras family protein that trafficks to cytoplasm and nucleus.</title>
        <authorList>
            <person name="Guil S."/>
            <person name="de La Iglesia N."/>
            <person name="Fernandez-Larrea J."/>
            <person name="Cifuentes D."/>
            <person name="Ferrer J.C."/>
            <person name="Guinovart J.J."/>
            <person name="Bach-Elias M."/>
        </authorList>
    </citation>
    <scope>INTERACTION WITH HRAS</scope>
</reference>
<reference key="19">
    <citation type="journal article" date="2003" name="J. Biol. Chem.">
        <title>The scaffolding protein RACK1 interacts with androgen receptor and promotes cross-talk through a protein kinase C signaling pathway.</title>
        <authorList>
            <person name="Rigas A.C."/>
            <person name="Ozanne D.M."/>
            <person name="Neal D.E."/>
            <person name="Robson C.N."/>
        </authorList>
    </citation>
    <scope>FUNCTION</scope>
    <scope>INTERACTION WITH AR</scope>
    <scope>SUBCELLULAR LOCATION</scope>
</reference>
<reference key="20">
    <citation type="journal article" date="2003" name="Mol. Biol. Cell">
        <title>RACK1 regulates integrin-mediated adhesion, protrusion, and chemotactic cell migration via its Src-binding site.</title>
        <authorList>
            <person name="Cox E.A."/>
            <person name="Bennin D."/>
            <person name="Doan A.T."/>
            <person name="O'Toole T."/>
            <person name="Huttenlocher A."/>
        </authorList>
    </citation>
    <scope>FUNCTION</scope>
</reference>
<reference key="21">
    <citation type="journal article" date="2003" name="Nature">
        <title>Proteomic characterization of the human centrosome by protein correlation profiling.</title>
        <authorList>
            <person name="Andersen J.S."/>
            <person name="Wilkinson C.J."/>
            <person name="Mayor T."/>
            <person name="Mortensen P."/>
            <person name="Nigg E.A."/>
            <person name="Mann M."/>
        </authorList>
    </citation>
    <scope>IDENTIFICATION BY MASS SPECTROMETRY</scope>
    <source>
        <tissue>Lymphoblast</tissue>
    </source>
</reference>
<reference key="22">
    <citation type="journal article" date="2004" name="J. Biol. Chem.">
        <title>Spatial and temporal regulation of RACK1 function and N-methyl-D-aspartate receptor activity through WD40 motif-mediated dimerization.</title>
        <authorList>
            <person name="Thornton C."/>
            <person name="Tang K.C."/>
            <person name="Phamluong K."/>
            <person name="Luong K."/>
            <person name="Vagts A."/>
            <person name="Nikanjam D."/>
            <person name="Yaka R."/>
            <person name="Ron D."/>
        </authorList>
    </citation>
    <scope>SUBUNIT</scope>
    <scope>DOMAIN</scope>
</reference>
<reference key="23">
    <citation type="journal article" date="2004" name="J. Cell Biol.">
        <title>Muscle ring finger protein-1 inhibits PKC-epsilon activation and prevents cardiomyocyte hypertrophy.</title>
        <authorList>
            <person name="Arya R."/>
            <person name="Kedar V."/>
            <person name="Hwang J.R."/>
            <person name="McDonough H."/>
            <person name="Li H.-H."/>
            <person name="Taylor J."/>
            <person name="Patterson C."/>
        </authorList>
    </citation>
    <scope>INTERACTION WITH TRIM63 AND PRKCE</scope>
</reference>
<reference key="24">
    <citation type="journal article" date="2004" name="J. Biol. Chem.">
        <title>Ki-1/57 interacts with RACK1 and is a substrate for the phosphorylation by phorbol 12-myristate 13-acetate-activated protein kinase C.</title>
        <authorList>
            <person name="Nery F.C."/>
            <person name="Passos D.O."/>
            <person name="Garcia V.S."/>
            <person name="Kobarg J."/>
        </authorList>
    </citation>
    <scope>INTERACTION WITH HABP4</scope>
</reference>
<reference key="25">
    <citation type="journal article" date="2005" name="Nat. Biotechnol.">
        <title>Immunoaffinity profiling of tyrosine phosphorylation in cancer cells.</title>
        <authorList>
            <person name="Rush J."/>
            <person name="Moritz A."/>
            <person name="Lee K.A."/>
            <person name="Guo A."/>
            <person name="Goss V.L."/>
            <person name="Spek E.J."/>
            <person name="Zhang H."/>
            <person name="Zha X.-M."/>
            <person name="Polakiewicz R.D."/>
            <person name="Comb M.J."/>
        </authorList>
    </citation>
    <scope>IDENTIFICATION BY MASS SPECTROMETRY [LARGE SCALE ANALYSIS]</scope>
</reference>
<reference key="26">
    <citation type="journal article" date="2006" name="Cancer Res.">
        <title>Receptor for activated C kinase 1 (RACK1) and Src regulate the tyrosine phosphorylation and function of the androgen receptor.</title>
        <authorList>
            <person name="Kraus S."/>
            <person name="Gioeli D."/>
            <person name="Vomastek T."/>
            <person name="Gordon V."/>
            <person name="Weber M.J."/>
        </authorList>
    </citation>
    <scope>FUNCTION</scope>
    <scope>INTERACTION WITH AR</scope>
</reference>
<reference key="27">
    <citation type="journal article" date="2007" name="Biochem. Soc. Trans.">
        <title>Interaction of integrin beta1 with cytokeratin 1 in neuroblastoma NMB7 cells.</title>
        <authorList>
            <person name="Chuang N.N."/>
            <person name="Huang C.C."/>
        </authorList>
    </citation>
    <scope>FUNCTION</scope>
    <scope>INTERACTION WITH KRT1</scope>
    <scope>SUBCELLULAR LOCATION</scope>
</reference>
<reference key="28">
    <citation type="journal article" date="2007" name="Mol. Cell">
        <title>RACK1 competes with HSP90 for binding to HIF-1alpha and is required for O(2)-independent and HSP90 inhibitor-induced degradation of HIF-1alpha.</title>
        <authorList>
            <person name="Liu Y.V."/>
            <person name="Baek J.H."/>
            <person name="Zhang H."/>
            <person name="Diez R."/>
            <person name="Cole R.N."/>
            <person name="Semenza G.L."/>
        </authorList>
    </citation>
    <scope>FUNCTION</scope>
    <scope>INTERACTION WITH HIF1A</scope>
    <scope>IDENTIFICATION BY MASS SPECTROMETRY</scope>
</reference>
<reference key="29">
    <citation type="journal article" date="2008" name="Curr. Biol.">
        <title>RACK1 inhibits TRPM6 activity via phosphorylation of the fused alpha-kinase domain.</title>
        <authorList>
            <person name="Cao G."/>
            <person name="Thebault S."/>
            <person name="van der Wijst J."/>
            <person name="van der Kemp A."/>
            <person name="Lasonder E."/>
            <person name="Bindels R.J."/>
            <person name="Hoenderop J.G."/>
        </authorList>
    </citation>
    <scope>FUNCTION</scope>
    <scope>INTERACTION WITH TRPM6</scope>
</reference>
<reference key="30">
    <citation type="journal article" date="2008" name="J. Biol. Chem.">
        <title>RACK1, a new ADAM12 interacting protein. Contribution to liver fibrogenesis.</title>
        <authorList>
            <person name="Bourd-Boittin K."/>
            <person name="Le Pabic H."/>
            <person name="Bonnier D."/>
            <person name="L'Helgoualc'h A."/>
            <person name="Theret N."/>
        </authorList>
    </citation>
    <scope>FUNCTION</scope>
    <scope>INTERACTION WITH ADAM12</scope>
    <scope>TISSUE SPECIFICITY</scope>
</reference>
<reference key="31">
    <citation type="journal article" date="2008" name="J. Biol. Chem.">
        <title>Cell surface levels of organellar Na+/H+ exchanger isoform 6 are regulated by interaction with RACK1.</title>
        <authorList>
            <person name="Ohgaki R."/>
            <person name="Fukura N."/>
            <person name="Matsushita M."/>
            <person name="Mitsui K."/>
            <person name="Kanazawa H."/>
        </authorList>
    </citation>
    <scope>INTERACTION WITH SLC9A6</scope>
</reference>
<reference key="32">
    <citation type="journal article" date="2008" name="Traffic">
        <title>RACK1 regulates the cell surface expression of the G protein-coupled receptor for thromboxane A(2).</title>
        <authorList>
            <person name="Parent A."/>
            <person name="Laroche G."/>
            <person name="Hamelin E."/>
            <person name="Parent J.L."/>
        </authorList>
    </citation>
    <scope>FUNCTION</scope>
    <scope>INTERACTION WITH TBXA2R</scope>
</reference>
<reference key="33">
    <citation type="journal article" date="2009" name="Anal. Chem.">
        <title>Lys-N and trypsin cover complementary parts of the phosphoproteome in a refined SCX-based approach.</title>
        <authorList>
            <person name="Gauci S."/>
            <person name="Helbig A.O."/>
            <person name="Slijper M."/>
            <person name="Krijgsveld J."/>
            <person name="Heck A.J."/>
            <person name="Mohammed S."/>
        </authorList>
    </citation>
    <scope>ACETYLATION [LARGE SCALE ANALYSIS] AT THR-2</scope>
    <scope>CLEAVAGE OF INITIATOR METHIONINE [LARGE SCALE ANALYSIS]</scope>
    <scope>IDENTIFICATION BY MASS SPECTROMETRY [LARGE SCALE ANALYSIS]</scope>
</reference>
<reference key="34">
    <citation type="journal article" date="2009" name="Biochem. Biophys. Res. Commun.">
        <title>RACK1 associates with CLEC-2 and promotes its ubiquitin-proteasome degradation.</title>
        <authorList>
            <person name="Ruan Y."/>
            <person name="Guo L."/>
            <person name="Qiao Y."/>
            <person name="Hong Y."/>
            <person name="Zhou L."/>
            <person name="Sun L."/>
            <person name="Wang L."/>
            <person name="Zhu H."/>
            <person name="Wang L."/>
            <person name="Yun X."/>
            <person name="Xie J."/>
            <person name="Gu J."/>
        </authorList>
    </citation>
    <scope>FUNCTION</scope>
    <scope>INTERACTION WITH CLEC1B</scope>
    <scope>SUBCELLULAR LOCATION</scope>
</reference>
<reference key="35">
    <citation type="journal article" date="2009" name="Biochem. J.">
        <title>Structural basis and specificity of human otubain 1-mediated deubiquitination.</title>
        <authorList>
            <person name="Edelmann M.J."/>
            <person name="Iphoefer A."/>
            <person name="Akutsu M."/>
            <person name="Altun M."/>
            <person name="di Gleria K."/>
            <person name="Kramer H.B."/>
            <person name="Fiebiger E."/>
            <person name="Dhe-Paganon S."/>
            <person name="Kessler B.M."/>
        </authorList>
    </citation>
    <scope>INTERACTION WITH OTUB1</scope>
</reference>
<reference key="36">
    <citation type="journal article" date="2009" name="Hepatol. Res.">
        <title>Receptor for activated C-kinase 1 regulates the cellular localization and function of ABCB4.</title>
        <authorList>
            <person name="Ikebuchi Y."/>
            <person name="Takada T."/>
            <person name="Ito K."/>
            <person name="Yoshikado T."/>
            <person name="Anzai N."/>
            <person name="Kanai Y."/>
            <person name="Suzuki H."/>
        </authorList>
    </citation>
    <scope>FUNCTION</scope>
    <scope>INTERACTION WITH ABCB4</scope>
</reference>
<reference key="37">
    <citation type="journal article" date="2009" name="J. Biol. Chem.">
        <title>Phosphorylation of RACK1 on tyrosine 52 by c-Abl is required for insulin-like growth factor I-mediated regulation of focal adhesion kinase.</title>
        <authorList>
            <person name="Kiely P.A."/>
            <person name="Baillie G.S."/>
            <person name="Barrett R."/>
            <person name="Buckley D.A."/>
            <person name="Adams D.R."/>
            <person name="Houslay M.D."/>
            <person name="O'Connor R."/>
        </authorList>
    </citation>
    <scope>FUNCTION</scope>
    <scope>INTERACTION WITH PTK2/FAK1</scope>
    <scope>PHOSPHORYLATION AT TYR-52</scope>
    <scope>MUTAGENESIS OF TYR-52; ARG-57; ARG-60; LYS-127 AND LYS-130</scope>
</reference>
<reference key="38">
    <citation type="journal article" date="2009" name="Science">
        <title>Lysine acetylation targets protein complexes and co-regulates major cellular functions.</title>
        <authorList>
            <person name="Choudhary C."/>
            <person name="Kumar C."/>
            <person name="Gnad F."/>
            <person name="Nielsen M.L."/>
            <person name="Rehman M."/>
            <person name="Walther T.C."/>
            <person name="Olsen J.V."/>
            <person name="Mann M."/>
        </authorList>
    </citation>
    <scope>ACETYLATION [LARGE SCALE ANALYSIS] AT LYS-130</scope>
    <scope>IDENTIFICATION BY MASS SPECTROMETRY [LARGE SCALE ANALYSIS]</scope>
</reference>
<reference key="39">
    <citation type="journal article" date="2010" name="Cell. Signal.">
        <title>RACK1 promotes Bax oligomerization and dissociates the interaction of Bax and Bcl-XL.</title>
        <authorList>
            <person name="Wu Y."/>
            <person name="Wang Y."/>
            <person name="Sun Y."/>
            <person name="Zhang L."/>
            <person name="Wang D."/>
            <person name="Ren F."/>
            <person name="Chang D."/>
            <person name="Chang Z."/>
            <person name="Jia B."/>
        </authorList>
    </citation>
    <scope>FUNCTION</scope>
    <scope>INTERACTION WITH BAX</scope>
</reference>
<reference key="40">
    <citation type="journal article" date="2010" name="Oncogene">
        <title>Copine-III interacts with ErbB2 and promotes tumor cell migration.</title>
        <authorList>
            <person name="Heinrich C."/>
            <person name="Keller C."/>
            <person name="Boulay A."/>
            <person name="Vecchi M."/>
            <person name="Bianchi M."/>
            <person name="Sack R."/>
            <person name="Lienhard S."/>
            <person name="Duss S."/>
            <person name="Hofsteenge J."/>
            <person name="Hynes N.E."/>
        </authorList>
    </citation>
    <scope>INTERACTION WITH CPNE3</scope>
</reference>
<reference key="41">
    <citation type="journal article" date="2010" name="PLoS ONE">
        <title>RACK1 associates with muscarinic receptors and regulates M(2) receptor trafficking.</title>
        <authorList>
            <person name="Reiner C.L."/>
            <person name="McCullar J.S."/>
            <person name="Kow R.L."/>
            <person name="Le J.H."/>
            <person name="Goodlett D.R."/>
            <person name="Nathanson N.M."/>
        </authorList>
    </citation>
    <scope>FUNCTION</scope>
    <scope>INTERACTION WITH CHRM2</scope>
    <scope>IDENTIFICATION BY MASS SPECTROMETRY</scope>
</reference>
<reference key="42">
    <citation type="journal article" date="2010" name="RNA">
        <title>A stimulatory role for the La-related protein 4B in translation.</title>
        <authorList>
            <person name="Schaffler K."/>
            <person name="Schulz K."/>
            <person name="Hirmer A."/>
            <person name="Wiesner J."/>
            <person name="Grimm M."/>
            <person name="Sickmann A."/>
            <person name="Fischer U."/>
        </authorList>
    </citation>
    <scope>FUNCTION</scope>
    <scope>SUBCELLULAR LOCATION</scope>
    <scope>INTERACTION WITH PABPC1 AND RACK1</scope>
</reference>
<reference key="43">
    <citation type="journal article" date="2011" name="BMC Syst. Biol.">
        <title>Initial characterization of the human central proteome.</title>
        <authorList>
            <person name="Burkard T.R."/>
            <person name="Planyavsky M."/>
            <person name="Kaupe I."/>
            <person name="Breitwieser F.P."/>
            <person name="Buerckstuemmer T."/>
            <person name="Bennett K.L."/>
            <person name="Superti-Furga G."/>
            <person name="Colinge J."/>
        </authorList>
    </citation>
    <scope>IDENTIFICATION BY MASS SPECTROMETRY [LARGE SCALE ANALYSIS]</scope>
</reference>
<reference key="44">
    <citation type="journal article" date="2011" name="Breast Cancer Res. Treat.">
        <title>RACK1 promotes breast carcinoma migration/metastasis via activation of the RhoA/Rho kinase pathway.</title>
        <authorList>
            <person name="Cao X.X."/>
            <person name="Xu J.D."/>
            <person name="Xu J.W."/>
            <person name="Liu X.L."/>
            <person name="Cheng Y.Y."/>
            <person name="Li Q.Q."/>
            <person name="Xu Z.D."/>
            <person name="Liu X.P."/>
        </authorList>
    </citation>
    <scope>FUNCTION</scope>
    <scope>INTERACTION WITH RHOA</scope>
    <scope>SUBCELLULAR LOCATION</scope>
</reference>
<reference key="45">
    <citation type="journal article" date="2011" name="J. Biol. Chem.">
        <title>RACK1 regulates VEGF/Flt1-mediated cell migration via activation of a PI3-K/Akt pathway.</title>
        <authorList>
            <person name="Wang F."/>
            <person name="Yamauchi M."/>
            <person name="Muramatsu M."/>
            <person name="Osawa T."/>
            <person name="Tsuchida R."/>
            <person name="Shibuya M."/>
        </authorList>
    </citation>
    <scope>FUNCTION</scope>
    <scope>INTERACTION WITH FLT1</scope>
</reference>
<reference key="46">
    <citation type="journal article" date="2011" name="Mol. Cell. Biol.">
        <title>La-related protein 4 binds poly(A), interacts with the poly(A)-binding protein MLLE domain via a variant PAM2w motif, and can promote mRNA stability.</title>
        <authorList>
            <person name="Yang R."/>
            <person name="Gaidamakov S.A."/>
            <person name="Xie J."/>
            <person name="Lee J."/>
            <person name="Martino L."/>
            <person name="Kozlov G."/>
            <person name="Crawford A.K."/>
            <person name="Russo A.N."/>
            <person name="Conte M.R."/>
            <person name="Gehring K."/>
            <person name="Maraia R.J."/>
        </authorList>
    </citation>
    <scope>INTERACTION WITH LARP4</scope>
</reference>
<reference key="47">
    <citation type="journal article" date="2011" name="PLoS ONE">
        <title>The RACK1 signaling scaffold protein selectively interacts with Yersinia pseudotuberculosis virulence function.</title>
        <authorList>
            <person name="Thorslund S.E."/>
            <person name="Edgren T."/>
            <person name="Pettersson J."/>
            <person name="Nordfelth R."/>
            <person name="Sellin M.E."/>
            <person name="Ivanova E."/>
            <person name="Francis M.S."/>
            <person name="Isaksson E.L."/>
            <person name="Wolf-Watz H."/>
            <person name="Fallman M."/>
        </authorList>
    </citation>
    <scope>FUNCTION (MICROBIAL INFECTION)</scope>
    <scope>INTERACTION WITH YERSINIA PSEUDOTUBERCULOSIS YOPK</scope>
    <scope>SUBCELLULAR LOCATION</scope>
</reference>
<reference key="48">
    <citation type="journal article" date="2011" name="Sci. Signal.">
        <title>System-wide temporal characterization of the proteome and phosphoproteome of human embryonic stem cell differentiation.</title>
        <authorList>
            <person name="Rigbolt K.T."/>
            <person name="Prokhorova T.A."/>
            <person name="Akimov V."/>
            <person name="Henningsen J."/>
            <person name="Johansen P.T."/>
            <person name="Kratchmarova I."/>
            <person name="Kassem M."/>
            <person name="Mann M."/>
            <person name="Olsen J.V."/>
            <person name="Blagoev B."/>
        </authorList>
    </citation>
    <scope>ACETYLATION [LARGE SCALE ANALYSIS] AT THR-2</scope>
    <scope>CLEAVAGE OF INITIATOR METHIONINE [LARGE SCALE ANALYSIS]</scope>
    <scope>IDENTIFICATION BY MASS SPECTROMETRY [LARGE SCALE ANALYSIS]</scope>
</reference>
<reference key="49">
    <citation type="journal article" date="2012" name="J. Biol. Chem.">
        <title>Receptor for activated C kinase 1 (RACK1) inhibits function of transient receptor potential (TRP)-type channel Pkd2L1 through physical interaction.</title>
        <authorList>
            <person name="Yang J."/>
            <person name="Wang Q."/>
            <person name="Zheng W."/>
            <person name="Tuli J."/>
            <person name="Li Q."/>
            <person name="Wu Y."/>
            <person name="Hussein S."/>
            <person name="Dai X.Q."/>
            <person name="Shafiei S."/>
            <person name="Li X.G."/>
            <person name="Shen P.Y."/>
            <person name="Tu J.C."/>
            <person name="Chen X.Z."/>
        </authorList>
    </citation>
    <scope>INTERACTION WITH PKD2L1</scope>
</reference>
<reference key="50">
    <citation type="journal article" date="2012" name="Mol. Cell. Proteomics">
        <title>Comparative large-scale characterisation of plant vs. mammal proteins reveals similar and idiosyncratic N-alpha acetylation features.</title>
        <authorList>
            <person name="Bienvenut W.V."/>
            <person name="Sumpton D."/>
            <person name="Martinez A."/>
            <person name="Lilla S."/>
            <person name="Espagne C."/>
            <person name="Meinnel T."/>
            <person name="Giglione C."/>
        </authorList>
    </citation>
    <scope>ACETYLATION [LARGE SCALE ANALYSIS] AT THR-2</scope>
    <scope>CLEAVAGE OF INITIATOR METHIONINE [LARGE SCALE ANALYSIS]</scope>
    <scope>IDENTIFICATION BY MASS SPECTROMETRY [LARGE SCALE ANALYSIS]</scope>
</reference>
<reference key="51">
    <citation type="journal article" date="2012" name="Proc. Natl. Acad. Sci. U.S.A.">
        <title>N-terminal acetylome analyses and functional insights of the N-terminal acetyltransferase NatB.</title>
        <authorList>
            <person name="Van Damme P."/>
            <person name="Lasa M."/>
            <person name="Polevoda B."/>
            <person name="Gazquez C."/>
            <person name="Elosegui-Artola A."/>
            <person name="Kim D.S."/>
            <person name="De Juan-Pardo E."/>
            <person name="Demeyer K."/>
            <person name="Hole K."/>
            <person name="Larrea E."/>
            <person name="Timmerman E."/>
            <person name="Prieto J."/>
            <person name="Arnesen T."/>
            <person name="Sherman F."/>
            <person name="Gevaert K."/>
            <person name="Aldabe R."/>
        </authorList>
    </citation>
    <scope>ACETYLATION [LARGE SCALE ANALYSIS] AT MET-1 AND THR-2</scope>
    <scope>CLEAVAGE OF INITIATOR METHIONINE [LARGE SCALE ANALYSIS]</scope>
    <scope>IDENTIFICATION BY MASS SPECTROMETRY [LARGE SCALE ANALYSIS]</scope>
</reference>
<reference key="52">
    <citation type="journal article" date="2013" name="J. Proteome Res.">
        <title>Toward a comprehensive characterization of a human cancer cell phosphoproteome.</title>
        <authorList>
            <person name="Zhou H."/>
            <person name="Di Palma S."/>
            <person name="Preisinger C."/>
            <person name="Peng M."/>
            <person name="Polat A.N."/>
            <person name="Heck A.J."/>
            <person name="Mohammed S."/>
        </authorList>
    </citation>
    <scope>PHOSPHORYLATION [LARGE SCALE ANALYSIS] AT THR-6; THR-10; THR-96 AND SER-276</scope>
    <scope>IDENTIFICATION BY MASS SPECTROMETRY [LARGE SCALE ANALYSIS]</scope>
    <source>
        <tissue>Cervix carcinoma</tissue>
        <tissue>Erythroleukemia</tissue>
    </source>
</reference>
<reference key="53">
    <citation type="journal article" date="2013" name="Mol. Biol. Cell">
        <title>Endosomal acidification by Na+/H+ exchanger NHE5 regulates TrkA cell-surface targeting and NGF-induced PI3K signaling.</title>
        <authorList>
            <person name="Diering G.H."/>
            <person name="Numata Y."/>
            <person name="Fan S."/>
            <person name="Church J."/>
            <person name="Numata M."/>
        </authorList>
    </citation>
    <scope>INTERACTION WITH SLC9A5</scope>
</reference>
<reference key="54">
    <citation type="journal article" date="2014" name="Curr. Opin. Struct. Biol.">
        <title>A new system for naming ribosomal proteins.</title>
        <authorList>
            <person name="Ban N."/>
            <person name="Beckmann R."/>
            <person name="Cate J.H.D."/>
            <person name="Dinman J.D."/>
            <person name="Dragon F."/>
            <person name="Ellis S.R."/>
            <person name="Lafontaine D.L.J."/>
            <person name="Lindahl L."/>
            <person name="Liljas A."/>
            <person name="Lipton J.M."/>
            <person name="McAlear M.A."/>
            <person name="Moore P.B."/>
            <person name="Noller H.F."/>
            <person name="Ortega J."/>
            <person name="Panse V.G."/>
            <person name="Ramakrishnan V."/>
            <person name="Spahn C.M.T."/>
            <person name="Steitz T.A."/>
            <person name="Tchorzewski M."/>
            <person name="Tollervey D."/>
            <person name="Warren A.J."/>
            <person name="Williamson J.R."/>
            <person name="Wilson D."/>
            <person name="Yonath A."/>
            <person name="Yusupov M."/>
        </authorList>
    </citation>
    <scope>NOMENCLATURE</scope>
</reference>
<reference key="55">
    <citation type="journal article" date="2014" name="Cell">
        <title>RACK1 controls IRES-mediated translation of viruses.</title>
        <authorList>
            <person name="Majzoub K."/>
            <person name="Hafirassou M.L."/>
            <person name="Meignin C."/>
            <person name="Goto A."/>
            <person name="Marzi S."/>
            <person name="Fedorova A."/>
            <person name="Verdier Y."/>
            <person name="Vinh J."/>
            <person name="Hoffmann J.A."/>
            <person name="Martin F."/>
            <person name="Baumert T.F."/>
            <person name="Schuster C."/>
            <person name="Imler J.L."/>
        </authorList>
    </citation>
    <scope>FUNCTION (MICROBIAL INFECTION)</scope>
</reference>
<reference key="56">
    <citation type="journal article" date="2014" name="J. Proteomics">
        <title>An enzyme assisted RP-RPLC approach for in-depth analysis of human liver phosphoproteome.</title>
        <authorList>
            <person name="Bian Y."/>
            <person name="Song C."/>
            <person name="Cheng K."/>
            <person name="Dong M."/>
            <person name="Wang F."/>
            <person name="Huang J."/>
            <person name="Sun D."/>
            <person name="Wang L."/>
            <person name="Ye M."/>
            <person name="Zou H."/>
        </authorList>
    </citation>
    <scope>IDENTIFICATION BY MASS SPECTROMETRY [LARGE SCALE ANALYSIS]</scope>
    <source>
        <tissue>Liver</tissue>
    </source>
</reference>
<reference key="57">
    <citation type="journal article" date="2015" name="Proteomics">
        <title>N-terminome analysis of the human mitochondrial proteome.</title>
        <authorList>
            <person name="Vaca Jacome A.S."/>
            <person name="Rabilloud T."/>
            <person name="Schaeffer-Reiss C."/>
            <person name="Rompais M."/>
            <person name="Ayoub D."/>
            <person name="Lane L."/>
            <person name="Bairoch A."/>
            <person name="Van Dorsselaer A."/>
            <person name="Carapito C."/>
        </authorList>
    </citation>
    <scope>IDENTIFICATION BY MASS SPECTROMETRY [LARGE SCALE ANALYSIS]</scope>
</reference>
<reference key="58">
    <citation type="journal article" date="2017" name="Mol. Cell">
        <title>ZNF598 and RACK1 regulate mammalian ribosome-associated quality control function by mediating regulatory 40S ribosomal ubiquitylation.</title>
        <authorList>
            <person name="Sundaramoorthy E."/>
            <person name="Leonard M."/>
            <person name="Mak R."/>
            <person name="Liao J."/>
            <person name="Fulzele A."/>
            <person name="Bennett E.J."/>
        </authorList>
    </citation>
    <scope>FUNCTION</scope>
    <scope>MUTAGENESIS OF 36-ARG--GLU-38</scope>
</reference>
<reference key="59">
    <citation type="journal article" date="2017" name="Cell. Signal.">
        <title>Structural analysis of ribosomal RACK1 and its role in translational control.</title>
        <authorList>
            <person name="Nielsen M.H."/>
            <person name="Flygaard R.K."/>
            <person name="Jenner L.B."/>
        </authorList>
    </citation>
    <scope>REVIEW</scope>
</reference>
<reference key="60">
    <citation type="journal article" date="2017" name="Nature">
        <title>Trans-kingdom mimicry underlies ribosome customization by a poxvirus kinase.</title>
        <authorList>
            <person name="Jha S."/>
            <person name="Rollins M.G."/>
            <person name="Fuchs G."/>
            <person name="Procter D.J."/>
            <person name="Hall E.A."/>
            <person name="Cozzolino K."/>
            <person name="Sarnow P."/>
            <person name="Savas J.N."/>
            <person name="Walsh D."/>
        </authorList>
    </citation>
    <scope>FUNCTION (MICROBIAL INFECTION)</scope>
    <scope>PHOSPHORYLATION AT SER-276; THR-277; SER-278 AND SER-279 (MICROBIAL INFECTION)</scope>
    <scope>MUTAGENESIS OF 276-SER--SER-279 AND SER-278</scope>
</reference>
<reference key="61">
    <citation type="journal article" date="2018" name="Sci. Rep.">
        <title>Trafficking, localization and degradation of the Na+,HCO3- co-transporter NBCn1 in kidney and breast epithelial cells.</title>
        <authorList>
            <person name="Olesen C.W."/>
            <person name="Vogensen J."/>
            <person name="Axholm I."/>
            <person name="Severin M."/>
            <person name="Schnipper J."/>
            <person name="Pedersen I.S."/>
            <person name="von Stemann J.H."/>
            <person name="Schroeder J.M."/>
            <person name="Christensen D.P."/>
            <person name="Pedersen S.F."/>
        </authorList>
    </citation>
    <scope>SUBCELLULAR LOCATION</scope>
    <scope>INTERACTION WITH SLC4A7</scope>
</reference>
<reference key="62">
    <citation type="journal article" date="2023" name="J. Virol.">
        <title>The matrix protein of respiratory syncytial virus suppresses interferon signaling via RACK1 association.</title>
        <authorList>
            <person name="Cao J."/>
            <person name="Shi M."/>
            <person name="Zhu L."/>
            <person name="Li X."/>
            <person name="Li A."/>
            <person name="Wu S.Y."/>
            <person name="Chiang C.M."/>
            <person name="Zhang Y."/>
        </authorList>
    </citation>
    <scope>INTERACTION WITH HUMAN RESPIRATORY SYNCYTIAL VIRUS MATRIX PROTEIN M (MICROBIAL INFECTION)</scope>
    <scope>SUBCELLULAR LOCATION</scope>
</reference>
<reference key="63">
    <citation type="journal article" date="2023" name="Nat. Commun.">
        <title>Proteomic and genetic analyses of influenza A viruses identify pan-viral host targets.</title>
        <authorList>
            <person name="Haas K.M."/>
            <person name="McGregor M.J."/>
            <person name="Bouhaddou M."/>
            <person name="Polacco B.J."/>
            <person name="Kim E.Y."/>
            <person name="Nguyen T.T."/>
            <person name="Newton B.W."/>
            <person name="Urbanowski M."/>
            <person name="Kim H."/>
            <person name="Williams M.A.P."/>
            <person name="Rezelj V.V."/>
            <person name="Hardy A."/>
            <person name="Fossati A."/>
            <person name="Stevenson E.J."/>
            <person name="Sukerman E."/>
            <person name="Kim T."/>
            <person name="Penugonda S."/>
            <person name="Moreno E."/>
            <person name="Braberg H."/>
            <person name="Zhou Y."/>
            <person name="Metreveli G."/>
            <person name="Harjai B."/>
            <person name="Tummino T.A."/>
            <person name="Melnyk J.E."/>
            <person name="Soucheray M."/>
            <person name="Batra J."/>
            <person name="Pache L."/>
            <person name="Martin-Sancho L."/>
            <person name="Carlson-Stevermer J."/>
            <person name="Jureka A.S."/>
            <person name="Basler C.F."/>
            <person name="Shokat K.M."/>
            <person name="Shoichet B.K."/>
            <person name="Shriver L.P."/>
            <person name="Johnson J.R."/>
            <person name="Shaw M.L."/>
            <person name="Chanda S.K."/>
            <person name="Roden D.M."/>
            <person name="Carter T.C."/>
            <person name="Kottyan L.C."/>
            <person name="Chisholm R.L."/>
            <person name="Pacheco J.A."/>
            <person name="Smith M.E."/>
            <person name="Schrodi S.J."/>
            <person name="Albrecht R.A."/>
            <person name="Vignuzzi M."/>
            <person name="Zuliani-Alvarez L."/>
            <person name="Swaney D.L."/>
            <person name="Eckhardt M."/>
            <person name="Wolinsky S.M."/>
            <person name="White K.M."/>
            <person name="Hultquist J.F."/>
            <person name="Kaake R.M."/>
            <person name="Garcia-Sastre A."/>
            <person name="Krogan N.J."/>
        </authorList>
    </citation>
    <scope>INTERACTION WITH INFLUENZA PROTEIN PA-X (MICROBIAL INFECTION)</scope>
</reference>
<reference key="64">
    <citation type="journal article" date="2010" name="BMC Struct. Biol.">
        <title>Solution structure of the human signaling protein RACK1.</title>
        <authorList>
            <person name="Goncalves K.A."/>
            <person name="Borges J.C."/>
            <person name="Silva J.C."/>
            <person name="Papa P.F."/>
            <person name="Bressan G.C."/>
            <person name="Torriani I.L."/>
            <person name="Kobarg J."/>
        </authorList>
    </citation>
    <scope>X-RAY SCATTERING SOLUTION STRUCTURE</scope>
    <scope>INTERACTION WITH HABP4</scope>
</reference>
<reference key="65">
    <citation type="journal article" date="2012" name="Acta Crystallogr. F">
        <title>Structure of human Rack1 protein at a resolution of 2.45 A.</title>
        <authorList>
            <person name="Ruiz Carrillo D."/>
            <person name="Chandrasekaran R."/>
            <person name="Nilsson M."/>
            <person name="Cornvik T."/>
            <person name="Liew C.W."/>
            <person name="Tan S.M."/>
            <person name="Lescar J."/>
        </authorList>
    </citation>
    <scope>X-RAY CRYSTALLOGRAPHY (2.45 ANGSTROMS)</scope>
</reference>
<reference key="66">
    <citation type="journal article" date="2013" name="Nature">
        <title>Structures of the human and Drosophila 80S ribosome.</title>
        <authorList>
            <person name="Anger A.M."/>
            <person name="Armache J.P."/>
            <person name="Berninghausen O."/>
            <person name="Habeck M."/>
            <person name="Subklewe M."/>
            <person name="Wilson D.N."/>
            <person name="Beckmann R."/>
        </authorList>
    </citation>
    <scope>STRUCTURE BY ELECTRON MICROSCOPY (5.0 ANGSTROMS) IN COMPLEX WITH THE 80S RIBOSOME</scope>
    <scope>FUNCTION</scope>
    <scope>SUBUNIT</scope>
    <scope>SUBCELLULAR LOCATION</scope>
</reference>